<evidence type="ECO:0000250" key="1">
    <source>
        <dbReference type="UniProtKB" id="P42225"/>
    </source>
</evidence>
<evidence type="ECO:0000255" key="2">
    <source>
        <dbReference type="PROSITE-ProRule" id="PRU00191"/>
    </source>
</evidence>
<evidence type="ECO:0000269" key="3">
    <source>
    </source>
</evidence>
<evidence type="ECO:0000269" key="4">
    <source>
    </source>
</evidence>
<evidence type="ECO:0000269" key="5">
    <source>
    </source>
</evidence>
<evidence type="ECO:0000269" key="6">
    <source>
    </source>
</evidence>
<evidence type="ECO:0000269" key="7">
    <source>
    </source>
</evidence>
<evidence type="ECO:0000269" key="8">
    <source>
    </source>
</evidence>
<evidence type="ECO:0000269" key="9">
    <source>
    </source>
</evidence>
<evidence type="ECO:0000269" key="10">
    <source>
    </source>
</evidence>
<evidence type="ECO:0000269" key="11">
    <source>
    </source>
</evidence>
<evidence type="ECO:0000269" key="12">
    <source>
    </source>
</evidence>
<evidence type="ECO:0000269" key="13">
    <source>
    </source>
</evidence>
<evidence type="ECO:0000269" key="14">
    <source>
    </source>
</evidence>
<evidence type="ECO:0000269" key="15">
    <source>
    </source>
</evidence>
<evidence type="ECO:0000269" key="16">
    <source>
    </source>
</evidence>
<evidence type="ECO:0000269" key="17">
    <source>
    </source>
</evidence>
<evidence type="ECO:0000269" key="18">
    <source>
    </source>
</evidence>
<evidence type="ECO:0000269" key="19">
    <source>
    </source>
</evidence>
<evidence type="ECO:0000269" key="20">
    <source>
    </source>
</evidence>
<evidence type="ECO:0000269" key="21">
    <source>
    </source>
</evidence>
<evidence type="ECO:0000269" key="22">
    <source>
    </source>
</evidence>
<evidence type="ECO:0000269" key="23">
    <source>
    </source>
</evidence>
<evidence type="ECO:0000269" key="24">
    <source>
    </source>
</evidence>
<evidence type="ECO:0000269" key="25">
    <source>
    </source>
</evidence>
<evidence type="ECO:0000269" key="26">
    <source>
    </source>
</evidence>
<evidence type="ECO:0000269" key="27">
    <source>
    </source>
</evidence>
<evidence type="ECO:0000269" key="28">
    <source>
    </source>
</evidence>
<evidence type="ECO:0000269" key="29">
    <source>
    </source>
</evidence>
<evidence type="ECO:0000269" key="30">
    <source>
    </source>
</evidence>
<evidence type="ECO:0000269" key="31">
    <source>
    </source>
</evidence>
<evidence type="ECO:0000269" key="32">
    <source>
    </source>
</evidence>
<evidence type="ECO:0000269" key="33">
    <source>
    </source>
</evidence>
<evidence type="ECO:0000269" key="34">
    <source>
    </source>
</evidence>
<evidence type="ECO:0000269" key="35">
    <source>
    </source>
</evidence>
<evidence type="ECO:0000269" key="36">
    <source>
    </source>
</evidence>
<evidence type="ECO:0000269" key="37">
    <source>
    </source>
</evidence>
<evidence type="ECO:0000269" key="38">
    <source>
    </source>
</evidence>
<evidence type="ECO:0000269" key="39">
    <source>
    </source>
</evidence>
<evidence type="ECO:0000269" key="40">
    <source>
    </source>
</evidence>
<evidence type="ECO:0000269" key="41">
    <source>
    </source>
</evidence>
<evidence type="ECO:0000269" key="42">
    <source>
    </source>
</evidence>
<evidence type="ECO:0000269" key="43">
    <source>
    </source>
</evidence>
<evidence type="ECO:0000269" key="44">
    <source>
    </source>
</evidence>
<evidence type="ECO:0000269" key="45">
    <source>
    </source>
</evidence>
<evidence type="ECO:0000269" key="46">
    <source>
    </source>
</evidence>
<evidence type="ECO:0000269" key="47">
    <source>
    </source>
</evidence>
<evidence type="ECO:0000269" key="48">
    <source>
    </source>
</evidence>
<evidence type="ECO:0000269" key="49">
    <source>
    </source>
</evidence>
<evidence type="ECO:0000269" key="50">
    <source>
    </source>
</evidence>
<evidence type="ECO:0000269" key="51">
    <source>
    </source>
</evidence>
<evidence type="ECO:0000269" key="52">
    <source>
    </source>
</evidence>
<evidence type="ECO:0000303" key="53">
    <source>
    </source>
</evidence>
<evidence type="ECO:0000303" key="54">
    <source>
    </source>
</evidence>
<evidence type="ECO:0000303" key="55">
    <source ref="6"/>
</evidence>
<evidence type="ECO:0000305" key="56"/>
<evidence type="ECO:0000305" key="57">
    <source>
    </source>
</evidence>
<evidence type="ECO:0007744" key="58">
    <source>
    </source>
</evidence>
<evidence type="ECO:0007744" key="59">
    <source>
    </source>
</evidence>
<evidence type="ECO:0007744" key="60">
    <source>
    </source>
</evidence>
<evidence type="ECO:0007744" key="61">
    <source>
    </source>
</evidence>
<evidence type="ECO:0007744" key="62">
    <source>
    </source>
</evidence>
<evidence type="ECO:0007744" key="63">
    <source>
    </source>
</evidence>
<evidence type="ECO:0007744" key="64">
    <source>
    </source>
</evidence>
<evidence type="ECO:0007744" key="65">
    <source>
    </source>
</evidence>
<evidence type="ECO:0007829" key="66">
    <source>
        <dbReference type="PDB" id="1BF5"/>
    </source>
</evidence>
<evidence type="ECO:0007829" key="67">
    <source>
        <dbReference type="PDB" id="1YVL"/>
    </source>
</evidence>
<evidence type="ECO:0007829" key="68">
    <source>
        <dbReference type="PDB" id="2KA6"/>
    </source>
</evidence>
<evidence type="ECO:0007829" key="69">
    <source>
        <dbReference type="PDB" id="3WWT"/>
    </source>
</evidence>
<evidence type="ECO:0007829" key="70">
    <source>
        <dbReference type="PDB" id="7NUF"/>
    </source>
</evidence>
<evidence type="ECO:0007829" key="71">
    <source>
        <dbReference type="PDB" id="8D3F"/>
    </source>
</evidence>
<feature type="initiator methionine" description="Removed" evidence="62">
    <location>
        <position position="1"/>
    </location>
</feature>
<feature type="chain" id="PRO_0000182410" description="Signal transducer and activator of transcription 1-alpha/beta">
    <location>
        <begin position="2"/>
        <end position="750"/>
    </location>
</feature>
<feature type="domain" description="SH2" evidence="2">
    <location>
        <begin position="573"/>
        <end position="670"/>
    </location>
</feature>
<feature type="coiled-coil region" evidence="50">
    <location>
        <begin position="136"/>
        <end position="317"/>
    </location>
</feature>
<feature type="site" description="Required for recruitment of EP300/p300" evidence="15">
    <location>
        <position position="724"/>
    </location>
</feature>
<feature type="modified residue" description="N-acetylserine" evidence="62">
    <location>
        <position position="2"/>
    </location>
</feature>
<feature type="modified residue" description="N6-methyllysine" evidence="37">
    <location>
        <position position="114"/>
    </location>
</feature>
<feature type="modified residue" description="N6-methyllysine" evidence="37">
    <location>
        <position position="175"/>
    </location>
</feature>
<feature type="modified residue" description="N6-methyllysine" evidence="37">
    <location>
        <position position="296"/>
    </location>
</feature>
<feature type="modified residue" description="N6-methyllysine" evidence="37">
    <location>
        <position position="366"/>
    </location>
</feature>
<feature type="modified residue" description="N6-methyllysine" evidence="37">
    <location>
        <position position="525"/>
    </location>
</feature>
<feature type="modified residue" description="N6-methyllysine" evidence="37">
    <location>
        <position position="637"/>
    </location>
</feature>
<feature type="modified residue" description="ADP-ribosyl glutamic acid; by PARP14" evidence="36">
    <location>
        <position position="657"/>
    </location>
</feature>
<feature type="modified residue" description="N6-methyllysine" evidence="37">
    <location>
        <position position="665"/>
    </location>
</feature>
<feature type="modified residue" description="Phosphotyrosine; by JAK1, JAK2 or TYK2" evidence="19 23 25 28 34 36 37 44 46">
    <location>
        <position position="701"/>
    </location>
</feature>
<feature type="modified residue" description="ADP-ribosyl glutamic acid; by PARP14" evidence="36">
    <location>
        <position position="705"/>
    </location>
</feature>
<feature type="modified residue" description="Phosphoserine; by IKKE" evidence="28">
    <location>
        <position position="708"/>
    </location>
</feature>
<feature type="modified residue" description="Phosphoserine; by CAMK2 and MAPK14" evidence="6 12 15 21 25 28 34 44 45 58 59 60 61 63">
    <location>
        <position position="727"/>
    </location>
</feature>
<feature type="modified residue" description="Phosphoserine; by IKKE" evidence="1">
    <location>
        <position position="745"/>
    </location>
</feature>
<feature type="modified residue" description="Phosphothreonine; by IKKB" evidence="38 44">
    <location>
        <position position="749"/>
    </location>
</feature>
<feature type="cross-link" description="Glycyl lysine isopeptide (Lys-Gly) (interchain with G-Cter in SUMO1); alternate" evidence="64">
    <location>
        <position position="703"/>
    </location>
</feature>
<feature type="cross-link" description="Glycyl lysine isopeptide (Lys-Gly) (interchain with G-Cter in SUMO2); alternate" evidence="65">
    <location>
        <position position="703"/>
    </location>
</feature>
<feature type="splice variant" id="VSP_006282" description="In isoform Beta." evidence="53 55">
    <location>
        <begin position="713"/>
        <end position="750"/>
    </location>
</feature>
<feature type="sequence variant" id="VAR_034521" description="In dbSNP:rs34255470.">
    <original>I</original>
    <variation>T</variation>
    <location>
        <position position="30"/>
    </location>
</feature>
<feature type="sequence variant" id="VAR_065934" description="In IMD31C; gain of function mutation associated with increased STAT1 phosphorylation due to impaired nuclear dephosphorylation; dbSNP:rs387906764." evidence="27 31">
    <original>D</original>
    <variation>G</variation>
    <location>
        <position position="165"/>
    </location>
</feature>
<feature type="sequence variant" id="VAR_065935" description="In IMD31C; dbSNP:rs387906767." evidence="27">
    <original>D</original>
    <variation>H</variation>
    <location>
        <position position="165"/>
    </location>
</feature>
<feature type="sequence variant" id="VAR_065936" description="In IMD31C; dbSNP:rs387906766." evidence="27">
    <original>Y</original>
    <variation>N</variation>
    <location>
        <position position="170"/>
    </location>
</feature>
<feature type="sequence variant" id="VAR_065937" description="In IMD31C; dbSNP:rs387906763." evidence="27">
    <original>C</original>
    <variation>R</variation>
    <location>
        <position position="174"/>
    </location>
</feature>
<feature type="sequence variant" id="VAR_075494" description="In IMD31C; gain of function; increases transactivation activity in response to IFNG; dbSNP:rs587777628." evidence="31">
    <original>N</original>
    <variation>K</variation>
    <location>
        <position position="179"/>
    </location>
</feature>
<feature type="sequence variant" id="VAR_065815" description="In IMD31B; not deleterious in terms of most STAT1 functions; causes abnormal splicing out of exon 8 from most mRNAs thereby decreasing protein levels by approximately 70%; dbSNP:rs587776870." evidence="24">
    <original>K</original>
    <variation>N</variation>
    <location>
        <position position="201"/>
    </location>
</feature>
<feature type="sequence variant" id="VAR_065938" description="In IMD31C." evidence="27">
    <original>M</original>
    <variation>I</variation>
    <location>
        <position position="202"/>
    </location>
</feature>
<feature type="sequence variant" id="VAR_065939" description="In IMD31C; dbSNP:rs387906762." evidence="27">
    <original>M</original>
    <variation>V</variation>
    <location>
        <position position="202"/>
    </location>
</feature>
<feature type="sequence variant" id="VAR_065940" description="In IMD31C; dbSNP:rs387906759." evidence="26 27">
    <original>A</original>
    <variation>V</variation>
    <location>
        <position position="267"/>
    </location>
</feature>
<feature type="sequence variant" id="VAR_065941" description="In IMD31C; dbSNP:rs387906768." evidence="27">
    <original>Q</original>
    <variation>P</variation>
    <location>
        <position position="271"/>
    </location>
</feature>
<feature type="sequence variant" id="VAR_065942" description="In IMD31C; gain of function; increases STAT1 phosphorylation due to impaired nuclear dephosphorylation; increases transactivation activity in response to IFNG; dbSNP:rs387906760." evidence="27 31">
    <original>R</original>
    <variation>Q</variation>
    <location>
        <position position="274"/>
    </location>
</feature>
<feature type="sequence variant" id="VAR_065943" description="In IMD31C; gain of function; increases phosphorylation in response to IFNG, IFNA and IL27 due to a loss of dephosphorylation; dbSNP:rs387906758." evidence="26 27 31">
    <original>R</original>
    <variation>W</variation>
    <location>
        <position position="274"/>
    </location>
</feature>
<feature type="sequence variant" id="VAR_075495" description="In IMD31C; gain of function; increases phosphorylation in response to IFNG and IFNA due to a loss of dephosphorylation; dbSNP:rs863223398." evidence="33">
    <original>K</original>
    <variation>E</variation>
    <location>
        <position position="278"/>
    </location>
</feature>
<feature type="sequence variant" id="VAR_075496" description="In IMD31C; gain of function; increases transactivation activity in response to IFNG; dbSNP:rs587777629." evidence="31">
    <original>Q</original>
    <variation>R</variation>
    <location>
        <position position="285"/>
    </location>
</feature>
<feature type="sequence variant" id="VAR_065944" description="In IMD31C; dbSNP:rs387906761." evidence="27">
    <original>K</original>
    <variation>I</variation>
    <location>
        <position position="286"/>
    </location>
</feature>
<feature type="sequence variant" id="VAR_065945" description="In IMD31C; dbSNP:rs387906765." evidence="27">
    <original>T</original>
    <variation>A</variation>
    <location>
        <position position="288"/>
    </location>
</feature>
<feature type="sequence variant" id="VAR_075497" description="In IMD31C; gain of function; increases basal STAT1 phosphorylation levels which are 10-20 fold higher than controls after IFNG stimulation." evidence="35">
    <original>K</original>
    <variation>N</variation>
    <location>
        <position position="298"/>
    </location>
</feature>
<feature type="sequence variant" id="VAR_065816" description="In IMD31A; affects the DNA-binding activity of the protein; dbSNP:rs137852680." evidence="17">
    <original>E</original>
    <variation>Q</variation>
    <location>
        <position position="320"/>
    </location>
</feature>
<feature type="sequence variant" id="VAR_075498" description="In IMD31C; gain of function; increases phosphorylation in response to IFNG and IFNA due to a loss of dephosphorylation; dbSNP:rs796065052." evidence="33">
    <original>G</original>
    <variation>D</variation>
    <location>
        <position position="384"/>
    </location>
</feature>
<feature type="sequence variant" id="VAR_075499" description="In IMD31C; gain of function; increases phosphorylation in response to IFNG, IFNA and IL27 due to a loss of dephosphorylation; dbSNP:rs587777630." evidence="31 33">
    <original>T</original>
    <variation>M</variation>
    <location>
        <position position="385"/>
    </location>
</feature>
<feature type="sequence variant" id="VAR_065817" description="In IMD31A; affects the DNA-binding activity of the protein; dbSNP:rs137852679." evidence="17">
    <original>Q</original>
    <variation>H</variation>
    <location>
        <position position="463"/>
    </location>
</feature>
<feature type="sequence variant" id="VAR_036001" description="In a breast cancer sample; somatic mutation." evidence="18">
    <original>P</original>
    <variation>A</variation>
    <location>
        <position position="491"/>
    </location>
</feature>
<feature type="sequence variant" id="VAR_018265" description="In IMD31B; found in an infant who died of a viral-like illness associated with complete STAT1 deficiency; dbSNP:rs137852678." evidence="8">
    <original>L</original>
    <variation>P</variation>
    <location>
        <position position="600"/>
    </location>
</feature>
<feature type="sequence variant" id="VAR_068713" description="In IMD31A; affects both phosphorylation and DNA-binding activity; results in impaired STAT1-mediated cellular response to IFN-gamma and interleukin-27; dbSNP:rs587777705." evidence="30">
    <original>K</original>
    <variation>E</variation>
    <location>
        <position position="637"/>
    </location>
</feature>
<feature type="sequence variant" id="VAR_068714" description="In IMD31A; impairs tyrosine phosphorylation; results in impaired STAT1-mediated cellular response to IFN-gamma and interleukin-27; dbSNP:rs587777704." evidence="30">
    <original>K</original>
    <variation>R</variation>
    <location>
        <position position="673"/>
    </location>
</feature>
<feature type="sequence variant" id="VAR_075500" description="In IMD31B; disrupts transactivation activity in response to IFNG." evidence="31">
    <original>Y</original>
    <variation>C</variation>
    <location>
        <position position="701"/>
    </location>
</feature>
<feature type="sequence variant" id="VAR_018266" description="In IMD31A; loss of GAF and ISGF3 activation; impairs the nuclear accumulation of GAF but not of ISGF3 in heterozygous cells stimulated by IFNs; affects phosphorylation of the protein; dbSNP:rs137852677." evidence="5 17">
    <original>L</original>
    <variation>S</variation>
    <location>
        <position position="706"/>
    </location>
</feature>
<feature type="mutagenesis site" description="Sumoylated." evidence="9">
    <original>K</original>
    <variation>R</variation>
    <location>
        <position position="110"/>
    </location>
</feature>
<feature type="mutagenesis site" description="No effect on IFN-alpha-induced STAT1 phosphorylation and nuclear translocation." evidence="37">
    <original>K</original>
    <variation>A</variation>
    <location>
        <position position="114"/>
    </location>
</feature>
<feature type="mutagenesis site" description="No effect on IFN-alpha-induced STAT1 phosphorylation and nuclear translocation." evidence="37">
    <original>K</original>
    <variation>A</variation>
    <location>
        <position position="175"/>
    </location>
</feature>
<feature type="mutagenesis site" description="No effect on IFN-alpha-induced STAT1 phosphorylation and nuclear translocation." evidence="37">
    <original>K</original>
    <variation>A</variation>
    <location>
        <position position="296"/>
    </location>
</feature>
<feature type="mutagenesis site" description="No effect on IFN-alpha-induced STAT1 phosphorylation and nuclear translocation." evidence="37">
    <original>K</original>
    <variation>A</variation>
    <location>
        <position position="366"/>
    </location>
</feature>
<feature type="mutagenesis site" description="Strongly reduced IFN-alpha-induced STAT1 phosphorylation and nuclear translocation. Does not affect ability to homodimerize." evidence="37">
    <original>K</original>
    <variation>A</variation>
    <location>
        <position position="525"/>
    </location>
</feature>
<feature type="mutagenesis site" description="No effect on IFN-alpha-induced STAT1 phosphorylation and nuclear translocation." evidence="37">
    <original>KK</original>
    <variation>AA</variation>
    <location>
        <begin position="636"/>
        <end position="637"/>
    </location>
</feature>
<feature type="mutagenesis site" description="Enhances STAT1 nuclear translocation and interferon (IFN)-stimulated gene (ISG) expression in response to IFN-beta stimulation. Reduces viral load in infected cultured cells." evidence="34">
    <original>AEN</original>
    <variation>CEC</variation>
    <location>
        <begin position="656"/>
        <end position="658"/>
    </location>
</feature>
<feature type="mutagenesis site" description="Loss of ADP-ribosylation and increased Tyr-701 phosphorylation; when associated with Q-705." evidence="36">
    <original>E</original>
    <variation>Q</variation>
    <location>
        <position position="657"/>
    </location>
</feature>
<feature type="mutagenesis site" description="No effect on IFN-alpha-induced STAT1 phosphorylation and nuclear translocation." evidence="37">
    <original>K</original>
    <variation>A</variation>
    <location>
        <position position="665"/>
    </location>
</feature>
<feature type="mutagenesis site" description="No effect on transcriptional activation of ARID5A." evidence="38">
    <original>Y</original>
    <variation>A</variation>
    <location>
        <position position="701"/>
    </location>
</feature>
<feature type="mutagenesis site" description="Not phosphorylated at S-708 upon IFNB induction." evidence="21 28">
    <original>Y</original>
    <variation>E</variation>
    <location>
        <position position="701"/>
    </location>
</feature>
<feature type="mutagenesis site" description="No effect on basal sumoylation. Enhances sumoylation in the presence of MAPK stimulation. Phosphorylated at S-708 upon IFNB induction." evidence="21 28">
    <original>Y</original>
    <variation>F</variation>
    <location>
        <position position="701"/>
    </location>
</feature>
<feature type="mutagenesis site" description="Abolishes sumoylation by SUMO1. Increased IFN-gamma-mediated transactivation." evidence="9 10">
    <original>K</original>
    <variation>R</variation>
    <location>
        <position position="703"/>
    </location>
</feature>
<feature type="mutagenesis site" description="No effect on transcriptional activation of ARID5A." evidence="38">
    <original>T</original>
    <variation>A</variation>
    <location>
        <position position="704"/>
    </location>
</feature>
<feature type="mutagenesis site" description="Loss of ADP-ribosylation and increased Tyr-701 phosphorylation; when associated with Q-657." evidence="36">
    <original>E</original>
    <variation>Q</variation>
    <location>
        <position position="705"/>
    </location>
</feature>
<feature type="mutagenesis site" description="Phosphorylated at Y-701 upon IFNB induction. No effect on transcriptional activation of ARID5A." evidence="28 38">
    <original>S</original>
    <variation>A</variation>
    <location>
        <position position="708"/>
    </location>
</feature>
<feature type="mutagenesis site" description="Not phosphorylated at Y-701 upon IFNB induction." evidence="28">
    <original>S</original>
    <variation>D</variation>
    <location>
        <position position="708"/>
    </location>
</feature>
<feature type="mutagenesis site" description="No effect on transcriptional activation of ARID5A." evidence="38">
    <original>S</original>
    <variation>A</variation>
    <location>
        <position position="710"/>
    </location>
</feature>
<feature type="mutagenesis site" description="No effect on transcriptional activation of ARID5A." evidence="38">
    <original>S</original>
    <variation>A</variation>
    <location>
        <position position="715"/>
    </location>
</feature>
<feature type="mutagenesis site" description="No effect on transcriptional activation of ARID5A." evidence="38">
    <original>T</original>
    <variation>A</variation>
    <location>
        <position position="719"/>
    </location>
</feature>
<feature type="mutagenesis site" description="No effect on transcriptional activation of ARID5A." evidence="38">
    <original>T</original>
    <variation>A</variation>
    <location>
        <position position="720"/>
    </location>
</feature>
<feature type="mutagenesis site" description="Impaired phosphorylation at S-727." evidence="15">
    <original>L</original>
    <variation>A</variation>
    <location>
        <position position="724"/>
    </location>
</feature>
<feature type="mutagenesis site" description="Decreased transcriptional activation. No effect on basal sumoylation. No enhancement of sumoylation on MAPK stimulation. No PRKCD-induced apoptosis. Upon IFNB induction, phosphorylated at Y-701 but not at S-708. No effect on transcriptional activation of ARID5A." evidence="12 21 28 38">
    <original>S</original>
    <variation>A</variation>
    <location>
        <position position="727"/>
    </location>
</feature>
<feature type="mutagenesis site" description="No change in enhancement of MAPK-induced sumoylation. Basal interaction with PIAS1. Interaction with PIAS1 increased on MAPK stimulation." evidence="12 21 28">
    <original>S</original>
    <variation>D</variation>
    <location>
        <position position="727"/>
    </location>
</feature>
<feature type="mutagenesis site" description="No change in enhancement of MAPK-induced sumoylation." evidence="12 21 28">
    <original>S</original>
    <variation>E</variation>
    <location>
        <position position="727"/>
    </location>
</feature>
<feature type="mutagenesis site" description="No effect on transcriptional activation of ARID5A." evidence="38">
    <original>S</original>
    <variation>A</variation>
    <location>
        <position position="735"/>
    </location>
</feature>
<feature type="mutagenesis site" description="No effect on transcriptional activation of ARID5A." evidence="38">
    <original>S</original>
    <variation>A</variation>
    <location>
        <position position="740"/>
    </location>
</feature>
<feature type="mutagenesis site" description="No effect on transcriptional activation of ARID5A." evidence="38">
    <original>S</original>
    <variation>A</variation>
    <location>
        <position position="745"/>
    </location>
</feature>
<feature type="mutagenesis site" description="Reduced transcriptional activation of ARID5A and IL12B. No effect on nuclear translocation. Abolishes IKKB-mediated phosphorylation at this position." evidence="38 44">
    <original>T</original>
    <variation>A</variation>
    <location>
        <position position="749"/>
    </location>
</feature>
<feature type="mutagenesis site" description="Phosphomimetic mutant; no effect on transcriptional activation of ARID5A or IL12B. No effect on nuclear translocation." evidence="38">
    <original>T</original>
    <variation>E</variation>
    <location>
        <position position="749"/>
    </location>
</feature>
<feature type="sequence conflict" description="In Ref. 2; ADA59516." evidence="56" ref="2">
    <original>A</original>
    <variation>T</variation>
    <location>
        <position position="46"/>
    </location>
</feature>
<feature type="sequence conflict" description="In Ref. 4; BAF85293." evidence="56" ref="4">
    <original>S</original>
    <variation>G</variation>
    <location>
        <position position="307"/>
    </location>
</feature>
<feature type="sequence conflict" description="In Ref. 5; CAH18430." evidence="56" ref="5">
    <original>Q</original>
    <variation>R</variation>
    <location>
        <position position="718"/>
    </location>
</feature>
<feature type="helix" evidence="69">
    <location>
        <begin position="3"/>
        <end position="8"/>
    </location>
</feature>
<feature type="helix" evidence="69">
    <location>
        <begin position="12"/>
        <end position="21"/>
    </location>
</feature>
<feature type="strand" evidence="69">
    <location>
        <begin position="23"/>
        <end position="26"/>
    </location>
</feature>
<feature type="helix" evidence="69">
    <location>
        <begin position="28"/>
        <end position="33"/>
    </location>
</feature>
<feature type="helix" evidence="69">
    <location>
        <begin position="35"/>
        <end position="40"/>
    </location>
</feature>
<feature type="helix" evidence="69">
    <location>
        <begin position="43"/>
        <end position="46"/>
    </location>
</feature>
<feature type="helix" evidence="69">
    <location>
        <begin position="50"/>
        <end position="73"/>
    </location>
</feature>
<feature type="helix" evidence="69">
    <location>
        <begin position="77"/>
        <end position="94"/>
    </location>
</feature>
<feature type="helix" evidence="69">
    <location>
        <begin position="99"/>
        <end position="122"/>
    </location>
</feature>
<feature type="helix" evidence="70">
    <location>
        <begin position="134"/>
        <end position="175"/>
    </location>
</feature>
<feature type="turn" evidence="70">
    <location>
        <begin position="176"/>
        <end position="179"/>
    </location>
</feature>
<feature type="helix" evidence="70">
    <location>
        <begin position="192"/>
        <end position="233"/>
    </location>
</feature>
<feature type="helix" evidence="70">
    <location>
        <begin position="235"/>
        <end position="247"/>
    </location>
</feature>
<feature type="helix" evidence="70">
    <location>
        <begin position="257"/>
        <end position="286"/>
    </location>
</feature>
<feature type="helix" evidence="70">
    <location>
        <begin position="293"/>
        <end position="315"/>
    </location>
</feature>
<feature type="strand" evidence="70">
    <location>
        <begin position="317"/>
        <end position="324"/>
    </location>
</feature>
<feature type="strand" evidence="70">
    <location>
        <begin position="334"/>
        <end position="336"/>
    </location>
</feature>
<feature type="strand" evidence="70">
    <location>
        <begin position="341"/>
        <end position="349"/>
    </location>
</feature>
<feature type="helix" evidence="70">
    <location>
        <begin position="352"/>
        <end position="354"/>
    </location>
</feature>
<feature type="turn" evidence="70">
    <location>
        <begin position="355"/>
        <end position="357"/>
    </location>
</feature>
<feature type="strand" evidence="70">
    <location>
        <begin position="359"/>
        <end position="365"/>
    </location>
</feature>
<feature type="helix" evidence="70">
    <location>
        <begin position="370"/>
        <end position="373"/>
    </location>
</feature>
<feature type="strand" evidence="66">
    <location>
        <begin position="374"/>
        <end position="376"/>
    </location>
</feature>
<feature type="strand" evidence="70">
    <location>
        <begin position="380"/>
        <end position="384"/>
    </location>
</feature>
<feature type="strand" evidence="70">
    <location>
        <begin position="387"/>
        <end position="389"/>
    </location>
</feature>
<feature type="strand" evidence="66">
    <location>
        <begin position="391"/>
        <end position="395"/>
    </location>
</feature>
<feature type="turn" evidence="66">
    <location>
        <begin position="396"/>
        <end position="398"/>
    </location>
</feature>
<feature type="strand" evidence="70">
    <location>
        <begin position="401"/>
        <end position="411"/>
    </location>
</feature>
<feature type="strand" evidence="66">
    <location>
        <begin position="421"/>
        <end position="425"/>
    </location>
</feature>
<feature type="helix" evidence="70">
    <location>
        <begin position="426"/>
        <end position="428"/>
    </location>
</feature>
<feature type="strand" evidence="70">
    <location>
        <begin position="433"/>
        <end position="441"/>
    </location>
</feature>
<feature type="strand" evidence="70">
    <location>
        <begin position="444"/>
        <end position="451"/>
    </location>
</feature>
<feature type="strand" evidence="70">
    <location>
        <begin position="455"/>
        <end position="460"/>
    </location>
</feature>
<feature type="helix" evidence="70">
    <location>
        <begin position="461"/>
        <end position="463"/>
    </location>
</feature>
<feature type="helix" evidence="70">
    <location>
        <begin position="464"/>
        <end position="477"/>
    </location>
</feature>
<feature type="turn" evidence="70">
    <location>
        <begin position="484"/>
        <end position="488"/>
    </location>
</feature>
<feature type="helix" evidence="70">
    <location>
        <begin position="495"/>
        <end position="509"/>
    </location>
</feature>
<feature type="helix" evidence="70">
    <location>
        <begin position="516"/>
        <end position="527"/>
    </location>
</feature>
<feature type="helix" evidence="70">
    <location>
        <begin position="539"/>
        <end position="542"/>
    </location>
</feature>
<feature type="strand" evidence="66">
    <location>
        <begin position="550"/>
        <end position="552"/>
    </location>
</feature>
<feature type="helix" evidence="70">
    <location>
        <begin position="554"/>
        <end position="568"/>
    </location>
</feature>
<feature type="helix" evidence="70">
    <location>
        <begin position="570"/>
        <end position="574"/>
    </location>
</feature>
<feature type="helix" evidence="70">
    <location>
        <begin position="584"/>
        <end position="591"/>
    </location>
</feature>
<feature type="strand" evidence="67">
    <location>
        <begin position="592"/>
        <end position="594"/>
    </location>
</feature>
<feature type="strand" evidence="70">
    <location>
        <begin position="598"/>
        <end position="603"/>
    </location>
</feature>
<feature type="strand" evidence="70">
    <location>
        <begin position="612"/>
        <end position="618"/>
    </location>
</feature>
<feature type="strand" evidence="66">
    <location>
        <begin position="621"/>
        <end position="624"/>
    </location>
</feature>
<feature type="strand" evidence="70">
    <location>
        <begin position="627"/>
        <end position="631"/>
    </location>
</feature>
<feature type="helix" evidence="70">
    <location>
        <begin position="636"/>
        <end position="641"/>
    </location>
</feature>
<feature type="helix" evidence="70">
    <location>
        <begin position="644"/>
        <end position="650"/>
    </location>
</feature>
<feature type="strand" evidence="71">
    <location>
        <begin position="652"/>
        <end position="654"/>
    </location>
</feature>
<feature type="strand" evidence="66">
    <location>
        <begin position="657"/>
        <end position="659"/>
    </location>
</feature>
<feature type="turn" evidence="70">
    <location>
        <begin position="668"/>
        <end position="670"/>
    </location>
</feature>
<feature type="helix" evidence="70">
    <location>
        <begin position="673"/>
        <end position="677"/>
    </location>
</feature>
<feature type="turn" evidence="70">
    <location>
        <begin position="678"/>
        <end position="680"/>
    </location>
</feature>
<feature type="strand" evidence="71">
    <location>
        <begin position="709"/>
        <end position="711"/>
    </location>
</feature>
<feature type="helix" evidence="68">
    <location>
        <begin position="728"/>
        <end position="738"/>
    </location>
</feature>
<feature type="turn" evidence="68">
    <location>
        <begin position="739"/>
        <end position="742"/>
    </location>
</feature>
<feature type="helix" evidence="68">
    <location>
        <begin position="743"/>
        <end position="745"/>
    </location>
</feature>
<feature type="turn" evidence="68">
    <location>
        <begin position="746"/>
        <end position="748"/>
    </location>
</feature>
<name>STAT1_HUMAN</name>
<organism>
    <name type="scientific">Homo sapiens</name>
    <name type="common">Human</name>
    <dbReference type="NCBI Taxonomy" id="9606"/>
    <lineage>
        <taxon>Eukaryota</taxon>
        <taxon>Metazoa</taxon>
        <taxon>Chordata</taxon>
        <taxon>Craniata</taxon>
        <taxon>Vertebrata</taxon>
        <taxon>Euteleostomi</taxon>
        <taxon>Mammalia</taxon>
        <taxon>Eutheria</taxon>
        <taxon>Euarchontoglires</taxon>
        <taxon>Primates</taxon>
        <taxon>Haplorrhini</taxon>
        <taxon>Catarrhini</taxon>
        <taxon>Hominidae</taxon>
        <taxon>Homo</taxon>
    </lineage>
</organism>
<gene>
    <name type="primary">STAT1</name>
</gene>
<dbReference type="EMBL" id="M97935">
    <property type="protein sequence ID" value="AAB64012.1"/>
    <property type="molecule type" value="mRNA"/>
</dbReference>
<dbReference type="EMBL" id="M97936">
    <property type="status" value="NOT_ANNOTATED_CDS"/>
    <property type="molecule type" value="mRNA"/>
</dbReference>
<dbReference type="EMBL" id="GU211347">
    <property type="protein sequence ID" value="ADA59516.1"/>
    <property type="molecule type" value="mRNA"/>
</dbReference>
<dbReference type="EMBL" id="AY865620">
    <property type="protein sequence ID" value="AAW56072.1"/>
    <property type="molecule type" value="Genomic_DNA"/>
</dbReference>
<dbReference type="EMBL" id="AK292604">
    <property type="protein sequence ID" value="BAF85293.1"/>
    <property type="molecule type" value="mRNA"/>
</dbReference>
<dbReference type="EMBL" id="AK315002">
    <property type="protein sequence ID" value="BAG37497.1"/>
    <property type="molecule type" value="mRNA"/>
</dbReference>
<dbReference type="EMBL" id="CR749636">
    <property type="protein sequence ID" value="CAH18430.1"/>
    <property type="molecule type" value="mRNA"/>
</dbReference>
<dbReference type="EMBL" id="BT007241">
    <property type="protein sequence ID" value="AAP35905.1"/>
    <property type="molecule type" value="mRNA"/>
</dbReference>
<dbReference type="EMBL" id="AC067945">
    <property type="protein sequence ID" value="AAY24183.1"/>
    <property type="molecule type" value="Genomic_DNA"/>
</dbReference>
<dbReference type="EMBL" id="CH471058">
    <property type="protein sequence ID" value="EAX10850.1"/>
    <property type="molecule type" value="Genomic_DNA"/>
</dbReference>
<dbReference type="EMBL" id="CH471058">
    <property type="protein sequence ID" value="EAX10851.1"/>
    <property type="molecule type" value="Genomic_DNA"/>
</dbReference>
<dbReference type="EMBL" id="CH471058">
    <property type="protein sequence ID" value="EAX10852.1"/>
    <property type="molecule type" value="Genomic_DNA"/>
</dbReference>
<dbReference type="EMBL" id="CH471058">
    <property type="protein sequence ID" value="EAX10855.1"/>
    <property type="molecule type" value="Genomic_DNA"/>
</dbReference>
<dbReference type="EMBL" id="BC002704">
    <property type="protein sequence ID" value="AAH02704.1"/>
    <property type="molecule type" value="mRNA"/>
</dbReference>
<dbReference type="EMBL" id="U18662">
    <property type="status" value="NOT_ANNOTATED_CDS"/>
    <property type="molecule type" value="Genomic_DNA"/>
</dbReference>
<dbReference type="EMBL" id="U18663">
    <property type="status" value="NOT_ANNOTATED_CDS"/>
    <property type="molecule type" value="Genomic_DNA"/>
</dbReference>
<dbReference type="EMBL" id="U18664">
    <property type="status" value="NOT_ANNOTATED_CDS"/>
    <property type="molecule type" value="Genomic_DNA"/>
</dbReference>
<dbReference type="EMBL" id="U18665">
    <property type="status" value="NOT_ANNOTATED_CDS"/>
    <property type="molecule type" value="Genomic_DNA"/>
</dbReference>
<dbReference type="EMBL" id="U18666">
    <property type="status" value="NOT_ANNOTATED_CDS"/>
    <property type="molecule type" value="Genomic_DNA"/>
</dbReference>
<dbReference type="EMBL" id="U18667">
    <property type="status" value="NOT_ANNOTATED_CDS"/>
    <property type="molecule type" value="Genomic_DNA"/>
</dbReference>
<dbReference type="EMBL" id="U18668">
    <property type="status" value="NOT_ANNOTATED_CDS"/>
    <property type="molecule type" value="Genomic_DNA"/>
</dbReference>
<dbReference type="EMBL" id="U18669">
    <property type="status" value="NOT_ANNOTATED_CDS"/>
    <property type="molecule type" value="Genomic_DNA"/>
</dbReference>
<dbReference type="EMBL" id="U18670">
    <property type="status" value="NOT_ANNOTATED_CDS"/>
    <property type="molecule type" value="Genomic_DNA"/>
</dbReference>
<dbReference type="CCDS" id="CCDS2309.1">
    <molecule id="P42224-1"/>
</dbReference>
<dbReference type="CCDS" id="CCDS42793.1">
    <molecule id="P42224-2"/>
</dbReference>
<dbReference type="PIR" id="A46159">
    <property type="entry name" value="A46159"/>
</dbReference>
<dbReference type="RefSeq" id="NP_009330.1">
    <molecule id="P42224-1"/>
    <property type="nucleotide sequence ID" value="NM_007315.4"/>
</dbReference>
<dbReference type="RefSeq" id="NP_644671.1">
    <molecule id="P42224-2"/>
    <property type="nucleotide sequence ID" value="NM_139266.3"/>
</dbReference>
<dbReference type="RefSeq" id="XP_006712781.1">
    <molecule id="P42224-1"/>
    <property type="nucleotide sequence ID" value="XM_006712718.2"/>
</dbReference>
<dbReference type="RefSeq" id="XP_054199535.1">
    <molecule id="P42224-1"/>
    <property type="nucleotide sequence ID" value="XM_054343560.1"/>
</dbReference>
<dbReference type="PDB" id="1BF5">
    <property type="method" value="X-ray"/>
    <property type="resolution" value="2.90 A"/>
    <property type="chains" value="A=136-710"/>
</dbReference>
<dbReference type="PDB" id="1YVL">
    <property type="method" value="X-ray"/>
    <property type="resolution" value="3.00 A"/>
    <property type="chains" value="A/B=1-683"/>
</dbReference>
<dbReference type="PDB" id="2KA6">
    <property type="method" value="NMR"/>
    <property type="chains" value="B=710-750"/>
</dbReference>
<dbReference type="PDB" id="3WWT">
    <property type="method" value="X-ray"/>
    <property type="resolution" value="2.00 A"/>
    <property type="chains" value="A=1-126"/>
</dbReference>
<dbReference type="PDB" id="7NUF">
    <property type="method" value="X-ray"/>
    <property type="resolution" value="2.00 A"/>
    <property type="chains" value="A=132-684"/>
</dbReference>
<dbReference type="PDB" id="8D3F">
    <property type="method" value="X-ray"/>
    <property type="resolution" value="2.97 A"/>
    <property type="chains" value="A=132-713"/>
</dbReference>
<dbReference type="PDBsum" id="1BF5"/>
<dbReference type="PDBsum" id="1YVL"/>
<dbReference type="PDBsum" id="2KA6"/>
<dbReference type="PDBsum" id="3WWT"/>
<dbReference type="PDBsum" id="7NUF"/>
<dbReference type="PDBsum" id="8D3F"/>
<dbReference type="SMR" id="P42224"/>
<dbReference type="BioGRID" id="112649">
    <property type="interactions" value="340"/>
</dbReference>
<dbReference type="ComplexPortal" id="CPX-6016">
    <property type="entry name" value="ISGF3 complex"/>
</dbReference>
<dbReference type="ComplexPortal" id="CPX-6041">
    <property type="entry name" value="STAT1/STAT3 complex"/>
</dbReference>
<dbReference type="ComplexPortal" id="CPX-6042">
    <property type="entry name" value="STAT1/STAT4 complex"/>
</dbReference>
<dbReference type="ComplexPortal" id="CPX-6048">
    <property type="entry name" value="STAT1 homodimer"/>
</dbReference>
<dbReference type="CORUM" id="P42224"/>
<dbReference type="DIP" id="DIP-46140N"/>
<dbReference type="FunCoup" id="P42224">
    <property type="interactions" value="1896"/>
</dbReference>
<dbReference type="IntAct" id="P42224">
    <property type="interactions" value="225"/>
</dbReference>
<dbReference type="MINT" id="P42224"/>
<dbReference type="STRING" id="9606.ENSP00000354394"/>
<dbReference type="BindingDB" id="P42224"/>
<dbReference type="ChEMBL" id="CHEMBL6101"/>
<dbReference type="DrugCentral" id="P42224"/>
<dbReference type="CarbonylDB" id="P42224"/>
<dbReference type="GlyCosmos" id="P42224">
    <property type="glycosylation" value="2 sites, 1 glycan"/>
</dbReference>
<dbReference type="GlyGen" id="P42224">
    <property type="glycosylation" value="3 sites, 1 O-linked glycan (3 sites)"/>
</dbReference>
<dbReference type="iPTMnet" id="P42224"/>
<dbReference type="MetOSite" id="P42224"/>
<dbReference type="PhosphoSitePlus" id="P42224"/>
<dbReference type="SwissPalm" id="P42224"/>
<dbReference type="BioMuta" id="STAT1"/>
<dbReference type="DMDM" id="2507413"/>
<dbReference type="CPTAC" id="CPTAC-1272"/>
<dbReference type="CPTAC" id="CPTAC-1746"/>
<dbReference type="CPTAC" id="CPTAC-5964"/>
<dbReference type="jPOST" id="P42224"/>
<dbReference type="MassIVE" id="P42224"/>
<dbReference type="PaxDb" id="9606-ENSP00000354394"/>
<dbReference type="PeptideAtlas" id="P42224"/>
<dbReference type="ProteomicsDB" id="55491">
    <molecule id="P42224-1"/>
</dbReference>
<dbReference type="ProteomicsDB" id="55492">
    <molecule id="P42224-2"/>
</dbReference>
<dbReference type="Pumba" id="P42224"/>
<dbReference type="ABCD" id="P42224">
    <property type="antibodies" value="2 sequenced antibodies"/>
</dbReference>
<dbReference type="Antibodypedia" id="688">
    <property type="antibodies" value="2426 antibodies from 54 providers"/>
</dbReference>
<dbReference type="CPTC" id="P42224">
    <property type="antibodies" value="3 antibodies"/>
</dbReference>
<dbReference type="DNASU" id="6772"/>
<dbReference type="Ensembl" id="ENST00000361099.8">
    <molecule id="P42224-1"/>
    <property type="protein sequence ID" value="ENSP00000354394.4"/>
    <property type="gene ID" value="ENSG00000115415.21"/>
</dbReference>
<dbReference type="Ensembl" id="ENST00000392322.7">
    <molecule id="P42224-2"/>
    <property type="protein sequence ID" value="ENSP00000376136.3"/>
    <property type="gene ID" value="ENSG00000115415.21"/>
</dbReference>
<dbReference type="Ensembl" id="ENST00000392323.6">
    <molecule id="P42224-2"/>
    <property type="protein sequence ID" value="ENSP00000376137.3"/>
    <property type="gene ID" value="ENSG00000115415.21"/>
</dbReference>
<dbReference type="Ensembl" id="ENST00000409465.5">
    <molecule id="P42224-1"/>
    <property type="protein sequence ID" value="ENSP00000386244.1"/>
    <property type="gene ID" value="ENSG00000115415.21"/>
</dbReference>
<dbReference type="Ensembl" id="ENST00000415035.2">
    <molecule id="P42224-1"/>
    <property type="protein sequence ID" value="ENSP00000388240.2"/>
    <property type="gene ID" value="ENSG00000115415.21"/>
</dbReference>
<dbReference type="Ensembl" id="ENST00000540176.6">
    <molecule id="P42224-1"/>
    <property type="protein sequence ID" value="ENSP00000438703.2"/>
    <property type="gene ID" value="ENSG00000115415.21"/>
</dbReference>
<dbReference type="Ensembl" id="ENST00000673841.1">
    <molecule id="P42224-2"/>
    <property type="protein sequence ID" value="ENSP00000501225.1"/>
    <property type="gene ID" value="ENSG00000115415.21"/>
</dbReference>
<dbReference type="Ensembl" id="ENST00000674080.1">
    <molecule id="P42224-2"/>
    <property type="protein sequence ID" value="ENSP00000501164.1"/>
    <property type="gene ID" value="ENSG00000115415.21"/>
</dbReference>
<dbReference type="Ensembl" id="ENST00000698141.1">
    <molecule id="P42224-1"/>
    <property type="protein sequence ID" value="ENSP00000513582.1"/>
    <property type="gene ID" value="ENSG00000115415.21"/>
</dbReference>
<dbReference type="GeneID" id="6772"/>
<dbReference type="KEGG" id="hsa:6772"/>
<dbReference type="MANE-Select" id="ENST00000361099.8">
    <property type="protein sequence ID" value="ENSP00000354394.4"/>
    <property type="RefSeq nucleotide sequence ID" value="NM_007315.4"/>
    <property type="RefSeq protein sequence ID" value="NP_009330.1"/>
</dbReference>
<dbReference type="UCSC" id="uc002usj.3">
    <molecule id="P42224-1"/>
    <property type="organism name" value="human"/>
</dbReference>
<dbReference type="AGR" id="HGNC:11362"/>
<dbReference type="CTD" id="6772"/>
<dbReference type="DisGeNET" id="6772"/>
<dbReference type="GeneCards" id="STAT1"/>
<dbReference type="HGNC" id="HGNC:11362">
    <property type="gene designation" value="STAT1"/>
</dbReference>
<dbReference type="HPA" id="ENSG00000115415">
    <property type="expression patterns" value="Low tissue specificity"/>
</dbReference>
<dbReference type="MalaCards" id="STAT1"/>
<dbReference type="MIM" id="600555">
    <property type="type" value="gene"/>
</dbReference>
<dbReference type="MIM" id="613796">
    <property type="type" value="phenotype"/>
</dbReference>
<dbReference type="MIM" id="614162">
    <property type="type" value="phenotype"/>
</dbReference>
<dbReference type="MIM" id="614892">
    <property type="type" value="phenotype"/>
</dbReference>
<dbReference type="neXtProt" id="NX_P42224"/>
<dbReference type="OpenTargets" id="ENSG00000115415"/>
<dbReference type="Orphanet" id="319595">
    <property type="disease" value="Mendelian susceptibility to mycobacterial diseases due to partial STAT1 deficiency"/>
</dbReference>
<dbReference type="Orphanet" id="391487">
    <property type="disease" value="STAT1-related autoimmune enteropathy and endocrinopathy-susceptibility to chronic infections syndrome"/>
</dbReference>
<dbReference type="Orphanet" id="391311">
    <property type="disease" value="Susceptibility to viral and mycobacterial infections due to STAT1 deficiency"/>
</dbReference>
<dbReference type="PharmGKB" id="PA36183"/>
<dbReference type="VEuPathDB" id="HostDB:ENSG00000115415"/>
<dbReference type="eggNOG" id="KOG3667">
    <property type="taxonomic scope" value="Eukaryota"/>
</dbReference>
<dbReference type="GeneTree" id="ENSGT01050000244905"/>
<dbReference type="HOGENOM" id="CLU_014189_3_0_1"/>
<dbReference type="InParanoid" id="P42224"/>
<dbReference type="OMA" id="FDTMMNA"/>
<dbReference type="OrthoDB" id="19300at2759"/>
<dbReference type="PAN-GO" id="P42224">
    <property type="GO annotations" value="7 GO annotations based on evolutionary models"/>
</dbReference>
<dbReference type="PhylomeDB" id="P42224"/>
<dbReference type="TreeFam" id="TF318648"/>
<dbReference type="PathwayCommons" id="P42224"/>
<dbReference type="Reactome" id="R-HSA-1059683">
    <property type="pathway name" value="Interleukin-6 signaling"/>
</dbReference>
<dbReference type="Reactome" id="R-HSA-1169408">
    <property type="pathway name" value="ISG15 antiviral mechanism"/>
</dbReference>
<dbReference type="Reactome" id="R-HSA-1433557">
    <property type="pathway name" value="Signaling by SCF-KIT"/>
</dbReference>
<dbReference type="Reactome" id="R-HSA-1839117">
    <property type="pathway name" value="Signaling by cytosolic FGFR1 fusion mutants"/>
</dbReference>
<dbReference type="Reactome" id="R-HSA-186763">
    <property type="pathway name" value="Downstream signal transduction"/>
</dbReference>
<dbReference type="Reactome" id="R-HSA-2173795">
    <molecule id="P42224-1"/>
    <property type="pathway name" value="Downregulation of SMAD2/3:SMAD4 transcriptional activity"/>
</dbReference>
<dbReference type="Reactome" id="R-HSA-6785807">
    <property type="pathway name" value="Interleukin-4 and Interleukin-13 signaling"/>
</dbReference>
<dbReference type="Reactome" id="R-HSA-877300">
    <molecule id="P42224-1"/>
    <property type="pathway name" value="Interferon gamma signaling"/>
</dbReference>
<dbReference type="Reactome" id="R-HSA-877312">
    <molecule id="P42224-1"/>
    <property type="pathway name" value="Regulation of IFNG signaling"/>
</dbReference>
<dbReference type="Reactome" id="R-HSA-8854691">
    <property type="pathway name" value="Interleukin-20 family signaling"/>
</dbReference>
<dbReference type="Reactome" id="R-HSA-8939902">
    <property type="pathway name" value="Regulation of RUNX2 expression and activity"/>
</dbReference>
<dbReference type="Reactome" id="R-HSA-8984722">
    <property type="pathway name" value="Interleukin-35 Signalling"/>
</dbReference>
<dbReference type="Reactome" id="R-HSA-8985947">
    <property type="pathway name" value="Interleukin-9 signaling"/>
</dbReference>
<dbReference type="Reactome" id="R-HSA-9013508">
    <property type="pathway name" value="NOTCH3 Intracellular Domain Regulates Transcription"/>
</dbReference>
<dbReference type="Reactome" id="R-HSA-9020956">
    <property type="pathway name" value="Interleukin-27 signaling"/>
</dbReference>
<dbReference type="Reactome" id="R-HSA-9020958">
    <property type="pathway name" value="Interleukin-21 signaling"/>
</dbReference>
<dbReference type="Reactome" id="R-HSA-909733">
    <property type="pathway name" value="Interferon alpha/beta signaling"/>
</dbReference>
<dbReference type="Reactome" id="R-HSA-912694">
    <property type="pathway name" value="Regulation of IFNA/IFNB signaling"/>
</dbReference>
<dbReference type="Reactome" id="R-HSA-9670439">
    <property type="pathway name" value="Signaling by phosphorylated juxtamembrane, extracellular and kinase domain KIT mutants"/>
</dbReference>
<dbReference type="Reactome" id="R-HSA-9673767">
    <property type="pathway name" value="Signaling by PDGFRA transmembrane, juxtamembrane and kinase domain mutants"/>
</dbReference>
<dbReference type="Reactome" id="R-HSA-9673770">
    <property type="pathway name" value="Signaling by PDGFRA extracellular domain mutants"/>
</dbReference>
<dbReference type="Reactome" id="R-HSA-9674555">
    <property type="pathway name" value="Signaling by CSF3 (G-CSF)"/>
</dbReference>
<dbReference type="Reactome" id="R-HSA-9680350">
    <property type="pathway name" value="Signaling by CSF1 (M-CSF) in myeloid cells"/>
</dbReference>
<dbReference type="Reactome" id="R-HSA-9705462">
    <property type="pathway name" value="Inactivation of CSF3 (G-CSF) signaling"/>
</dbReference>
<dbReference type="Reactome" id="R-HSA-9705671">
    <property type="pathway name" value="SARS-CoV-2 activates/modulates innate and adaptive immune responses"/>
</dbReference>
<dbReference type="Reactome" id="R-HSA-9725370">
    <property type="pathway name" value="Signaling by ALK fusions and activated point mutants"/>
</dbReference>
<dbReference type="Reactome" id="R-HSA-982772">
    <property type="pathway name" value="Growth hormone receptor signaling"/>
</dbReference>
<dbReference type="Reactome" id="R-HSA-9833482">
    <property type="pathway name" value="PKR-mediated signaling"/>
</dbReference>
<dbReference type="Reactome" id="R-HSA-9860927">
    <property type="pathway name" value="Turbulent (oscillatory, disturbed) flow shear stress activates signaling by PIEZO1 and integrins in endothelial cells"/>
</dbReference>
<dbReference type="SignaLink" id="P42224"/>
<dbReference type="SIGNOR" id="P42224"/>
<dbReference type="BioGRID-ORCS" id="6772">
    <property type="hits" value="34 hits in 1188 CRISPR screens"/>
</dbReference>
<dbReference type="CD-CODE" id="DEE660B4">
    <property type="entry name" value="Stress granule"/>
</dbReference>
<dbReference type="CD-CODE" id="FB4E32DD">
    <property type="entry name" value="Presynaptic clusters and postsynaptic densities"/>
</dbReference>
<dbReference type="ChiTaRS" id="STAT1">
    <property type="organism name" value="human"/>
</dbReference>
<dbReference type="EvolutionaryTrace" id="P42224"/>
<dbReference type="GeneWiki" id="STAT1"/>
<dbReference type="GenomeRNAi" id="6772"/>
<dbReference type="Pharos" id="P42224">
    <property type="development level" value="Tchem"/>
</dbReference>
<dbReference type="PRO" id="PR:P42224"/>
<dbReference type="Proteomes" id="UP000005640">
    <property type="component" value="Chromosome 2"/>
</dbReference>
<dbReference type="RNAct" id="P42224">
    <property type="molecule type" value="protein"/>
</dbReference>
<dbReference type="Bgee" id="ENSG00000115415">
    <property type="expression patterns" value="Expressed in epithelium of nasopharynx and 208 other cell types or tissues"/>
</dbReference>
<dbReference type="ExpressionAtlas" id="P42224">
    <property type="expression patterns" value="baseline and differential"/>
</dbReference>
<dbReference type="GO" id="GO:0030424">
    <property type="term" value="C:axon"/>
    <property type="evidence" value="ECO:0000250"/>
    <property type="project" value="UniProtKB"/>
</dbReference>
<dbReference type="GO" id="GO:0000785">
    <property type="term" value="C:chromatin"/>
    <property type="evidence" value="ECO:0000314"/>
    <property type="project" value="BHF-UCL"/>
</dbReference>
<dbReference type="GO" id="GO:0005737">
    <property type="term" value="C:cytoplasm"/>
    <property type="evidence" value="ECO:0000314"/>
    <property type="project" value="UniProtKB"/>
</dbReference>
<dbReference type="GO" id="GO:0005829">
    <property type="term" value="C:cytosol"/>
    <property type="evidence" value="ECO:0000314"/>
    <property type="project" value="HPA"/>
</dbReference>
<dbReference type="GO" id="GO:0030425">
    <property type="term" value="C:dendrite"/>
    <property type="evidence" value="ECO:0000250"/>
    <property type="project" value="UniProtKB"/>
</dbReference>
<dbReference type="GO" id="GO:0070721">
    <property type="term" value="C:ISGF3 complex"/>
    <property type="evidence" value="ECO:0000353"/>
    <property type="project" value="ComplexPortal"/>
</dbReference>
<dbReference type="GO" id="GO:0005730">
    <property type="term" value="C:nucleolus"/>
    <property type="evidence" value="ECO:0000314"/>
    <property type="project" value="HPA"/>
</dbReference>
<dbReference type="GO" id="GO:0005654">
    <property type="term" value="C:nucleoplasm"/>
    <property type="evidence" value="ECO:0000314"/>
    <property type="project" value="HPA"/>
</dbReference>
<dbReference type="GO" id="GO:0005634">
    <property type="term" value="C:nucleus"/>
    <property type="evidence" value="ECO:0000314"/>
    <property type="project" value="UniProtKB"/>
</dbReference>
<dbReference type="GO" id="GO:0048471">
    <property type="term" value="C:perinuclear region of cytoplasm"/>
    <property type="evidence" value="ECO:0000314"/>
    <property type="project" value="AgBase"/>
</dbReference>
<dbReference type="GO" id="GO:0032991">
    <property type="term" value="C:protein-containing complex"/>
    <property type="evidence" value="ECO:0000314"/>
    <property type="project" value="UniProtKB"/>
</dbReference>
<dbReference type="GO" id="GO:0090575">
    <property type="term" value="C:RNA polymerase II transcription regulator complex"/>
    <property type="evidence" value="ECO:0000353"/>
    <property type="project" value="ComplexPortal"/>
</dbReference>
<dbReference type="GO" id="GO:0045296">
    <property type="term" value="F:cadherin binding"/>
    <property type="evidence" value="ECO:0007005"/>
    <property type="project" value="BHF-UCL"/>
</dbReference>
<dbReference type="GO" id="GO:0031730">
    <property type="term" value="F:CCR5 chemokine receptor binding"/>
    <property type="evidence" value="ECO:0007669"/>
    <property type="project" value="Ensembl"/>
</dbReference>
<dbReference type="GO" id="GO:0003700">
    <property type="term" value="F:DNA-binding transcription factor activity"/>
    <property type="evidence" value="ECO:0000314"/>
    <property type="project" value="UniProtKB"/>
</dbReference>
<dbReference type="GO" id="GO:0000981">
    <property type="term" value="F:DNA-binding transcription factor activity, RNA polymerase II-specific"/>
    <property type="evidence" value="ECO:0000314"/>
    <property type="project" value="UniProtKB"/>
</dbReference>
<dbReference type="GO" id="GO:0003690">
    <property type="term" value="F:double-stranded DNA binding"/>
    <property type="evidence" value="ECO:0000314"/>
    <property type="project" value="UniProtKB"/>
</dbReference>
<dbReference type="GO" id="GO:0019899">
    <property type="term" value="F:enzyme binding"/>
    <property type="evidence" value="ECO:0000353"/>
    <property type="project" value="UniProtKB"/>
</dbReference>
<dbReference type="GO" id="GO:0035035">
    <property type="term" value="F:histone acetyltransferase binding"/>
    <property type="evidence" value="ECO:0000353"/>
    <property type="project" value="UniProtKB"/>
</dbReference>
<dbReference type="GO" id="GO:0042393">
    <property type="term" value="F:histone binding"/>
    <property type="evidence" value="ECO:0000353"/>
    <property type="project" value="UniProtKB"/>
</dbReference>
<dbReference type="GO" id="GO:0042802">
    <property type="term" value="F:identical protein binding"/>
    <property type="evidence" value="ECO:0000353"/>
    <property type="project" value="IntAct"/>
</dbReference>
<dbReference type="GO" id="GO:1990841">
    <property type="term" value="F:promoter-specific chromatin binding"/>
    <property type="evidence" value="ECO:0000314"/>
    <property type="project" value="UniProtKB"/>
</dbReference>
<dbReference type="GO" id="GO:0042803">
    <property type="term" value="F:protein homodimerization activity"/>
    <property type="evidence" value="ECO:0000314"/>
    <property type="project" value="UniProtKB"/>
</dbReference>
<dbReference type="GO" id="GO:0051721">
    <property type="term" value="F:protein phosphatase 2A binding"/>
    <property type="evidence" value="ECO:0007669"/>
    <property type="project" value="Ensembl"/>
</dbReference>
<dbReference type="GO" id="GO:0000978">
    <property type="term" value="F:RNA polymerase II cis-regulatory region sequence-specific DNA binding"/>
    <property type="evidence" value="ECO:0000314"/>
    <property type="project" value="BHF-UCL"/>
</dbReference>
<dbReference type="GO" id="GO:0000979">
    <property type="term" value="F:RNA polymerase II core promoter sequence-specific DNA binding"/>
    <property type="evidence" value="ECO:0000314"/>
    <property type="project" value="UniProtKB"/>
</dbReference>
<dbReference type="GO" id="GO:0000977">
    <property type="term" value="F:RNA polymerase II transcription regulatory region sequence-specific DNA binding"/>
    <property type="evidence" value="ECO:0000314"/>
    <property type="project" value="UniProtKB"/>
</dbReference>
<dbReference type="GO" id="GO:0001223">
    <property type="term" value="F:transcription coactivator binding"/>
    <property type="evidence" value="ECO:0000353"/>
    <property type="project" value="UniProtKB"/>
</dbReference>
<dbReference type="GO" id="GO:0001222">
    <property type="term" value="F:transcription corepressor binding"/>
    <property type="evidence" value="ECO:0000353"/>
    <property type="project" value="UniProtKB"/>
</dbReference>
<dbReference type="GO" id="GO:0005164">
    <property type="term" value="F:tumor necrosis factor receptor binding"/>
    <property type="evidence" value="ECO:0000353"/>
    <property type="project" value="UniProtKB"/>
</dbReference>
<dbReference type="GO" id="GO:0044389">
    <property type="term" value="F:ubiquitin-like protein ligase binding"/>
    <property type="evidence" value="ECO:0000353"/>
    <property type="project" value="UniProtKB"/>
</dbReference>
<dbReference type="GO" id="GO:0008015">
    <property type="term" value="P:blood circulation"/>
    <property type="evidence" value="ECO:0000250"/>
    <property type="project" value="UniProtKB"/>
</dbReference>
<dbReference type="GO" id="GO:0007259">
    <property type="term" value="P:cell surface receptor signaling pathway via JAK-STAT"/>
    <property type="evidence" value="ECO:0000314"/>
    <property type="project" value="UniProtKB"/>
</dbReference>
<dbReference type="GO" id="GO:0097696">
    <property type="term" value="P:cell surface receptor signaling pathway via STAT"/>
    <property type="evidence" value="ECO:0000314"/>
    <property type="project" value="BHF-UCL"/>
</dbReference>
<dbReference type="GO" id="GO:0032869">
    <property type="term" value="P:cellular response to insulin stimulus"/>
    <property type="evidence" value="ECO:0007669"/>
    <property type="project" value="Ensembl"/>
</dbReference>
<dbReference type="GO" id="GO:0035458">
    <property type="term" value="P:cellular response to interferon-beta"/>
    <property type="evidence" value="ECO:0000314"/>
    <property type="project" value="UniProt"/>
</dbReference>
<dbReference type="GO" id="GO:0071346">
    <property type="term" value="P:cellular response to type II interferon"/>
    <property type="evidence" value="ECO:0000314"/>
    <property type="project" value="UniProtKB"/>
</dbReference>
<dbReference type="GO" id="GO:0006952">
    <property type="term" value="P:defense response"/>
    <property type="evidence" value="ECO:0000318"/>
    <property type="project" value="GO_Central"/>
</dbReference>
<dbReference type="GO" id="GO:0051607">
    <property type="term" value="P:defense response to virus"/>
    <property type="evidence" value="ECO:0000314"/>
    <property type="project" value="UniProtKB"/>
</dbReference>
<dbReference type="GO" id="GO:0070106">
    <property type="term" value="P:interleukin-27-mediated signaling pathway"/>
    <property type="evidence" value="ECO:0000314"/>
    <property type="project" value="ARUK-UCL"/>
</dbReference>
<dbReference type="GO" id="GO:0038111">
    <property type="term" value="P:interleukin-7-mediated signaling pathway"/>
    <property type="evidence" value="ECO:0000314"/>
    <property type="project" value="UniProt"/>
</dbReference>
<dbReference type="GO" id="GO:0038113">
    <property type="term" value="P:interleukin-9-mediated signaling pathway"/>
    <property type="evidence" value="ECO:0000314"/>
    <property type="project" value="UniProt"/>
</dbReference>
<dbReference type="GO" id="GO:0072162">
    <property type="term" value="P:metanephric mesenchymal cell differentiation"/>
    <property type="evidence" value="ECO:0000250"/>
    <property type="project" value="UniProtKB"/>
</dbReference>
<dbReference type="GO" id="GO:0072136">
    <property type="term" value="P:metanephric mesenchymal cell proliferation involved in metanephros development"/>
    <property type="evidence" value="ECO:0000250"/>
    <property type="project" value="UniProtKB"/>
</dbReference>
<dbReference type="GO" id="GO:0046725">
    <property type="term" value="P:negative regulation by virus of viral protein levels in host cell"/>
    <property type="evidence" value="ECO:0000315"/>
    <property type="project" value="AgBase"/>
</dbReference>
<dbReference type="GO" id="GO:0016525">
    <property type="term" value="P:negative regulation of angiogenesis"/>
    <property type="evidence" value="ECO:0000315"/>
    <property type="project" value="UniProtKB"/>
</dbReference>
<dbReference type="GO" id="GO:0043124">
    <property type="term" value="P:negative regulation of canonical NF-kappaB signal transduction"/>
    <property type="evidence" value="ECO:0000315"/>
    <property type="project" value="UniProtKB"/>
</dbReference>
<dbReference type="GO" id="GO:0001937">
    <property type="term" value="P:negative regulation of endothelial cell proliferation"/>
    <property type="evidence" value="ECO:0000315"/>
    <property type="project" value="UniProtKB"/>
</dbReference>
<dbReference type="GO" id="GO:0003340">
    <property type="term" value="P:negative regulation of mesenchymal to epithelial transition involved in metanephros morphogenesis"/>
    <property type="evidence" value="ECO:0000250"/>
    <property type="project" value="UniProtKB"/>
</dbReference>
<dbReference type="GO" id="GO:0072308">
    <property type="term" value="P:negative regulation of metanephric nephron tubule epithelial cell differentiation"/>
    <property type="evidence" value="ECO:0000250"/>
    <property type="project" value="UniProtKB"/>
</dbReference>
<dbReference type="GO" id="GO:0000122">
    <property type="term" value="P:negative regulation of transcription by RNA polymerase II"/>
    <property type="evidence" value="ECO:0000250"/>
    <property type="project" value="UniProtKB"/>
</dbReference>
<dbReference type="GO" id="GO:0002230">
    <property type="term" value="P:positive regulation of defense response to virus by host"/>
    <property type="evidence" value="ECO:0000315"/>
    <property type="project" value="UniProtKB"/>
</dbReference>
<dbReference type="GO" id="GO:0045893">
    <property type="term" value="P:positive regulation of DNA-templated transcription"/>
    <property type="evidence" value="ECO:0000314"/>
    <property type="project" value="UniProtKB"/>
</dbReference>
<dbReference type="GO" id="GO:0045648">
    <property type="term" value="P:positive regulation of erythrocyte differentiation"/>
    <property type="evidence" value="ECO:0000315"/>
    <property type="project" value="UniProtKB"/>
</dbReference>
<dbReference type="GO" id="GO:0032727">
    <property type="term" value="P:positive regulation of interferon-alpha production"/>
    <property type="evidence" value="ECO:0000314"/>
    <property type="project" value="UniProtKB"/>
</dbReference>
<dbReference type="GO" id="GO:0002053">
    <property type="term" value="P:positive regulation of mesenchymal cell proliferation"/>
    <property type="evidence" value="ECO:0000250"/>
    <property type="project" value="UniProtKB"/>
</dbReference>
<dbReference type="GO" id="GO:0045429">
    <property type="term" value="P:positive regulation of nitric oxide biosynthetic process"/>
    <property type="evidence" value="ECO:0007669"/>
    <property type="project" value="Ensembl"/>
</dbReference>
<dbReference type="GO" id="GO:0048661">
    <property type="term" value="P:positive regulation of smooth muscle cell proliferation"/>
    <property type="evidence" value="ECO:0000250"/>
    <property type="project" value="UniProtKB"/>
</dbReference>
<dbReference type="GO" id="GO:0045944">
    <property type="term" value="P:positive regulation of transcription by RNA polymerase II"/>
    <property type="evidence" value="ECO:0000314"/>
    <property type="project" value="UniProtKB"/>
</dbReference>
<dbReference type="GO" id="GO:0042981">
    <property type="term" value="P:regulation of apoptotic process"/>
    <property type="evidence" value="ECO:0000304"/>
    <property type="project" value="UniProtKB"/>
</dbReference>
<dbReference type="GO" id="GO:0042127">
    <property type="term" value="P:regulation of cell population proliferation"/>
    <property type="evidence" value="ECO:0000318"/>
    <property type="project" value="GO_Central"/>
</dbReference>
<dbReference type="GO" id="GO:0006357">
    <property type="term" value="P:regulation of transcription by RNA polymerase II"/>
    <property type="evidence" value="ECO:0000314"/>
    <property type="project" value="UniProt"/>
</dbReference>
<dbReference type="GO" id="GO:0061326">
    <property type="term" value="P:renal tubule development"/>
    <property type="evidence" value="ECO:0000315"/>
    <property type="project" value="UniProtKB"/>
</dbReference>
<dbReference type="GO" id="GO:0051591">
    <property type="term" value="P:response to cAMP"/>
    <property type="evidence" value="ECO:0000250"/>
    <property type="project" value="UniProtKB"/>
</dbReference>
<dbReference type="GO" id="GO:0034097">
    <property type="term" value="P:response to cytokine"/>
    <property type="evidence" value="ECO:0000250"/>
    <property type="project" value="UniProtKB"/>
</dbReference>
<dbReference type="GO" id="GO:0042542">
    <property type="term" value="P:response to hydrogen peroxide"/>
    <property type="evidence" value="ECO:0007669"/>
    <property type="project" value="Ensembl"/>
</dbReference>
<dbReference type="GO" id="GO:0035456">
    <property type="term" value="P:response to interferon-beta"/>
    <property type="evidence" value="ECO:0000315"/>
    <property type="project" value="UniProtKB"/>
</dbReference>
<dbReference type="GO" id="GO:0009612">
    <property type="term" value="P:response to mechanical stimulus"/>
    <property type="evidence" value="ECO:0007669"/>
    <property type="project" value="Ensembl"/>
</dbReference>
<dbReference type="GO" id="GO:0007584">
    <property type="term" value="P:response to nutrient"/>
    <property type="evidence" value="ECO:0007669"/>
    <property type="project" value="Ensembl"/>
</dbReference>
<dbReference type="GO" id="GO:0043434">
    <property type="term" value="P:response to peptide hormone"/>
    <property type="evidence" value="ECO:0000250"/>
    <property type="project" value="UniProtKB"/>
</dbReference>
<dbReference type="GO" id="GO:0034341">
    <property type="term" value="P:response to type II interferon"/>
    <property type="evidence" value="ECO:0000314"/>
    <property type="project" value="UniProtKB"/>
</dbReference>
<dbReference type="GO" id="GO:0009410">
    <property type="term" value="P:response to xenobiotic stimulus"/>
    <property type="evidence" value="ECO:0007669"/>
    <property type="project" value="Ensembl"/>
</dbReference>
<dbReference type="GO" id="GO:0033209">
    <property type="term" value="P:tumor necrosis factor-mediated signaling pathway"/>
    <property type="evidence" value="ECO:0000314"/>
    <property type="project" value="UniProtKB"/>
</dbReference>
<dbReference type="GO" id="GO:0060337">
    <property type="term" value="P:type I interferon-mediated signaling pathway"/>
    <property type="evidence" value="ECO:0000314"/>
    <property type="project" value="UniProtKB"/>
</dbReference>
<dbReference type="GO" id="GO:0060333">
    <property type="term" value="P:type II interferon-mediated signaling pathway"/>
    <property type="evidence" value="ECO:0000314"/>
    <property type="project" value="BHF-UCL"/>
</dbReference>
<dbReference type="CDD" id="cd10372">
    <property type="entry name" value="SH2_STAT1"/>
    <property type="match status" value="1"/>
</dbReference>
<dbReference type="CDD" id="cd16851">
    <property type="entry name" value="STAT1_CCD"/>
    <property type="match status" value="1"/>
</dbReference>
<dbReference type="CDD" id="cd16845">
    <property type="entry name" value="STAT1_DBD"/>
    <property type="match status" value="1"/>
</dbReference>
<dbReference type="DisProt" id="DP00962"/>
<dbReference type="FunFam" id="1.10.238.10:FF:000012">
    <property type="entry name" value="Signal transducer and activator of transcription"/>
    <property type="match status" value="1"/>
</dbReference>
<dbReference type="FunFam" id="1.10.532.10:FF:000001">
    <property type="entry name" value="Signal transducer and activator of transcription"/>
    <property type="match status" value="1"/>
</dbReference>
<dbReference type="FunFam" id="1.20.1050.20:FF:000001">
    <property type="entry name" value="Signal transducer and activator of transcription"/>
    <property type="match status" value="1"/>
</dbReference>
<dbReference type="FunFam" id="2.60.40.630:FF:000001">
    <property type="entry name" value="Signal transducer and activator of transcription"/>
    <property type="match status" value="1"/>
</dbReference>
<dbReference type="FunFam" id="3.30.505.10:FF:000003">
    <property type="entry name" value="Signal transducer and activator of transcription"/>
    <property type="match status" value="1"/>
</dbReference>
<dbReference type="FunFam" id="6.10.250.3310:FF:000001">
    <property type="entry name" value="Signal transducer and activator of transcription"/>
    <property type="match status" value="1"/>
</dbReference>
<dbReference type="Gene3D" id="1.10.238.10">
    <property type="entry name" value="EF-hand"/>
    <property type="match status" value="1"/>
</dbReference>
<dbReference type="Gene3D" id="3.30.505.10">
    <property type="entry name" value="SH2 domain"/>
    <property type="match status" value="1"/>
</dbReference>
<dbReference type="Gene3D" id="6.10.250.3310">
    <property type="entry name" value="signal transducer and activator of transcription 1"/>
    <property type="match status" value="1"/>
</dbReference>
<dbReference type="Gene3D" id="1.20.1050.20">
    <property type="entry name" value="STAT transcription factor, all-alpha domain"/>
    <property type="match status" value="1"/>
</dbReference>
<dbReference type="Gene3D" id="2.60.40.630">
    <property type="entry name" value="STAT transcription factor, DNA-binding domain"/>
    <property type="match status" value="1"/>
</dbReference>
<dbReference type="Gene3D" id="1.10.532.10">
    <property type="entry name" value="STAT transcription factor, N-terminal domain"/>
    <property type="match status" value="1"/>
</dbReference>
<dbReference type="IDEAL" id="IID00046"/>
<dbReference type="InterPro" id="IPR008967">
    <property type="entry name" value="p53-like_TF_DNA-bd_sf"/>
</dbReference>
<dbReference type="InterPro" id="IPR000980">
    <property type="entry name" value="SH2"/>
</dbReference>
<dbReference type="InterPro" id="IPR036860">
    <property type="entry name" value="SH2_dom_sf"/>
</dbReference>
<dbReference type="InterPro" id="IPR001217">
    <property type="entry name" value="STAT"/>
</dbReference>
<dbReference type="InterPro" id="IPR038295">
    <property type="entry name" value="STAT1_C_sf"/>
</dbReference>
<dbReference type="InterPro" id="IPR035859">
    <property type="entry name" value="STAT1_SH2"/>
</dbReference>
<dbReference type="InterPro" id="IPR022752">
    <property type="entry name" value="STAT1_TAZ2-bd_C"/>
</dbReference>
<dbReference type="InterPro" id="IPR048988">
    <property type="entry name" value="STAT_linker"/>
</dbReference>
<dbReference type="InterPro" id="IPR036535">
    <property type="entry name" value="STAT_N_sf"/>
</dbReference>
<dbReference type="InterPro" id="IPR013800">
    <property type="entry name" value="STAT_TF_alpha"/>
</dbReference>
<dbReference type="InterPro" id="IPR015988">
    <property type="entry name" value="STAT_TF_coiled-coil"/>
</dbReference>
<dbReference type="InterPro" id="IPR013801">
    <property type="entry name" value="STAT_TF_DNA-bd"/>
</dbReference>
<dbReference type="InterPro" id="IPR012345">
    <property type="entry name" value="STAT_TF_DNA-bd_N"/>
</dbReference>
<dbReference type="InterPro" id="IPR013799">
    <property type="entry name" value="STAT_TF_prot_interaction"/>
</dbReference>
<dbReference type="PANTHER" id="PTHR11801">
    <property type="entry name" value="SIGNAL TRANSDUCER AND ACTIVATOR OF TRANSCRIPTION"/>
    <property type="match status" value="1"/>
</dbReference>
<dbReference type="Pfam" id="PF00017">
    <property type="entry name" value="SH2"/>
    <property type="match status" value="1"/>
</dbReference>
<dbReference type="Pfam" id="PF12162">
    <property type="entry name" value="STAT1_TAZ2bind"/>
    <property type="match status" value="1"/>
</dbReference>
<dbReference type="Pfam" id="PF01017">
    <property type="entry name" value="STAT_alpha"/>
    <property type="match status" value="1"/>
</dbReference>
<dbReference type="Pfam" id="PF02864">
    <property type="entry name" value="STAT_bind"/>
    <property type="match status" value="1"/>
</dbReference>
<dbReference type="Pfam" id="PF02865">
    <property type="entry name" value="STAT_int"/>
    <property type="match status" value="1"/>
</dbReference>
<dbReference type="Pfam" id="PF21354">
    <property type="entry name" value="STAT_linker"/>
    <property type="match status" value="1"/>
</dbReference>
<dbReference type="SMART" id="SM00964">
    <property type="entry name" value="STAT_int"/>
    <property type="match status" value="1"/>
</dbReference>
<dbReference type="SUPFAM" id="SSF49417">
    <property type="entry name" value="p53-like transcription factors"/>
    <property type="match status" value="1"/>
</dbReference>
<dbReference type="SUPFAM" id="SSF55550">
    <property type="entry name" value="SH2 domain"/>
    <property type="match status" value="1"/>
</dbReference>
<dbReference type="SUPFAM" id="SSF47655">
    <property type="entry name" value="STAT"/>
    <property type="match status" value="1"/>
</dbReference>
<dbReference type="SUPFAM" id="SSF48092">
    <property type="entry name" value="Transcription factor STAT-4 N-domain"/>
    <property type="match status" value="1"/>
</dbReference>
<dbReference type="PROSITE" id="PS50001">
    <property type="entry name" value="SH2"/>
    <property type="match status" value="1"/>
</dbReference>
<reference key="1">
    <citation type="journal article" date="1992" name="Proc. Natl. Acad. Sci. U.S.A.">
        <title>Proteins of transcription factor ISGF-3: one gene encodes the 91- and 84-kDa ISGF-3 proteins that are activated by interferon alpha.</title>
        <authorList>
            <person name="Schindler C."/>
            <person name="Fu X.-Y."/>
            <person name="Improta T."/>
            <person name="Aebersold R."/>
            <person name="Darnell J.E. Jr."/>
        </authorList>
    </citation>
    <scope>NUCLEOTIDE SEQUENCE [MRNA] (ISOFORM ALPHA)</scope>
    <scope>PROTEIN SEQUENCE OF 514-524; 654-660 AND 667-672</scope>
</reference>
<reference key="2">
    <citation type="submission" date="2009-11" db="EMBL/GenBank/DDBJ databases">
        <title>Novel STAT1 alleles in a patient with impaired resistance to mycobacteria.</title>
        <authorList>
            <person name="Kristensen I."/>
            <person name="Veirum J.E."/>
            <person name="Moeller B.K."/>
            <person name="Christiansen M."/>
        </authorList>
    </citation>
    <scope>NUCLEOTIDE SEQUENCE [MRNA] (ISOFORM ALPHA)</scope>
</reference>
<reference key="3">
    <citation type="submission" date="2004-12" db="EMBL/GenBank/DDBJ databases">
        <authorList>
            <consortium name="NIEHS SNPs program"/>
        </authorList>
    </citation>
    <scope>NUCLEOTIDE SEQUENCE [GENOMIC DNA]</scope>
</reference>
<reference key="4">
    <citation type="journal article" date="2004" name="Nat. Genet.">
        <title>Complete sequencing and characterization of 21,243 full-length human cDNAs.</title>
        <authorList>
            <person name="Ota T."/>
            <person name="Suzuki Y."/>
            <person name="Nishikawa T."/>
            <person name="Otsuki T."/>
            <person name="Sugiyama T."/>
            <person name="Irie R."/>
            <person name="Wakamatsu A."/>
            <person name="Hayashi K."/>
            <person name="Sato H."/>
            <person name="Nagai K."/>
            <person name="Kimura K."/>
            <person name="Makita H."/>
            <person name="Sekine M."/>
            <person name="Obayashi M."/>
            <person name="Nishi T."/>
            <person name="Shibahara T."/>
            <person name="Tanaka T."/>
            <person name="Ishii S."/>
            <person name="Yamamoto J."/>
            <person name="Saito K."/>
            <person name="Kawai Y."/>
            <person name="Isono Y."/>
            <person name="Nakamura Y."/>
            <person name="Nagahari K."/>
            <person name="Murakami K."/>
            <person name="Yasuda T."/>
            <person name="Iwayanagi T."/>
            <person name="Wagatsuma M."/>
            <person name="Shiratori A."/>
            <person name="Sudo H."/>
            <person name="Hosoiri T."/>
            <person name="Kaku Y."/>
            <person name="Kodaira H."/>
            <person name="Kondo H."/>
            <person name="Sugawara M."/>
            <person name="Takahashi M."/>
            <person name="Kanda K."/>
            <person name="Yokoi T."/>
            <person name="Furuya T."/>
            <person name="Kikkawa E."/>
            <person name="Omura Y."/>
            <person name="Abe K."/>
            <person name="Kamihara K."/>
            <person name="Katsuta N."/>
            <person name="Sato K."/>
            <person name="Tanikawa M."/>
            <person name="Yamazaki M."/>
            <person name="Ninomiya K."/>
            <person name="Ishibashi T."/>
            <person name="Yamashita H."/>
            <person name="Murakawa K."/>
            <person name="Fujimori K."/>
            <person name="Tanai H."/>
            <person name="Kimata M."/>
            <person name="Watanabe M."/>
            <person name="Hiraoka S."/>
            <person name="Chiba Y."/>
            <person name="Ishida S."/>
            <person name="Ono Y."/>
            <person name="Takiguchi S."/>
            <person name="Watanabe S."/>
            <person name="Yosida M."/>
            <person name="Hotuta T."/>
            <person name="Kusano J."/>
            <person name="Kanehori K."/>
            <person name="Takahashi-Fujii A."/>
            <person name="Hara H."/>
            <person name="Tanase T.-O."/>
            <person name="Nomura Y."/>
            <person name="Togiya S."/>
            <person name="Komai F."/>
            <person name="Hara R."/>
            <person name="Takeuchi K."/>
            <person name="Arita M."/>
            <person name="Imose N."/>
            <person name="Musashino K."/>
            <person name="Yuuki H."/>
            <person name="Oshima A."/>
            <person name="Sasaki N."/>
            <person name="Aotsuka S."/>
            <person name="Yoshikawa Y."/>
            <person name="Matsunawa H."/>
            <person name="Ichihara T."/>
            <person name="Shiohata N."/>
            <person name="Sano S."/>
            <person name="Moriya S."/>
            <person name="Momiyama H."/>
            <person name="Satoh N."/>
            <person name="Takami S."/>
            <person name="Terashima Y."/>
            <person name="Suzuki O."/>
            <person name="Nakagawa S."/>
            <person name="Senoh A."/>
            <person name="Mizoguchi H."/>
            <person name="Goto Y."/>
            <person name="Shimizu F."/>
            <person name="Wakebe H."/>
            <person name="Hishigaki H."/>
            <person name="Watanabe T."/>
            <person name="Sugiyama A."/>
            <person name="Takemoto M."/>
            <person name="Kawakami B."/>
            <person name="Yamazaki M."/>
            <person name="Watanabe K."/>
            <person name="Kumagai A."/>
            <person name="Itakura S."/>
            <person name="Fukuzumi Y."/>
            <person name="Fujimori Y."/>
            <person name="Komiyama M."/>
            <person name="Tashiro H."/>
            <person name="Tanigami A."/>
            <person name="Fujiwara T."/>
            <person name="Ono T."/>
            <person name="Yamada K."/>
            <person name="Fujii Y."/>
            <person name="Ozaki K."/>
            <person name="Hirao M."/>
            <person name="Ohmori Y."/>
            <person name="Kawabata A."/>
            <person name="Hikiji T."/>
            <person name="Kobatake N."/>
            <person name="Inagaki H."/>
            <person name="Ikema Y."/>
            <person name="Okamoto S."/>
            <person name="Okitani R."/>
            <person name="Kawakami T."/>
            <person name="Noguchi S."/>
            <person name="Itoh T."/>
            <person name="Shigeta K."/>
            <person name="Senba T."/>
            <person name="Matsumura K."/>
            <person name="Nakajima Y."/>
            <person name="Mizuno T."/>
            <person name="Morinaga M."/>
            <person name="Sasaki M."/>
            <person name="Togashi T."/>
            <person name="Oyama M."/>
            <person name="Hata H."/>
            <person name="Watanabe M."/>
            <person name="Komatsu T."/>
            <person name="Mizushima-Sugano J."/>
            <person name="Satoh T."/>
            <person name="Shirai Y."/>
            <person name="Takahashi Y."/>
            <person name="Nakagawa K."/>
            <person name="Okumura K."/>
            <person name="Nagase T."/>
            <person name="Nomura N."/>
            <person name="Kikuchi H."/>
            <person name="Masuho Y."/>
            <person name="Yamashita R."/>
            <person name="Nakai K."/>
            <person name="Yada T."/>
            <person name="Nakamura Y."/>
            <person name="Ohara O."/>
            <person name="Isogai T."/>
            <person name="Sugano S."/>
        </authorList>
    </citation>
    <scope>NUCLEOTIDE SEQUENCE [LARGE SCALE MRNA] (ISOFORM ALPHA)</scope>
    <source>
        <tissue>Placenta</tissue>
        <tissue>Testis</tissue>
    </source>
</reference>
<reference key="5">
    <citation type="journal article" date="2007" name="BMC Genomics">
        <title>The full-ORF clone resource of the German cDNA consortium.</title>
        <authorList>
            <person name="Bechtel S."/>
            <person name="Rosenfelder H."/>
            <person name="Duda A."/>
            <person name="Schmidt C.P."/>
            <person name="Ernst U."/>
            <person name="Wellenreuther R."/>
            <person name="Mehrle A."/>
            <person name="Schuster C."/>
            <person name="Bahr A."/>
            <person name="Bloecker H."/>
            <person name="Heubner D."/>
            <person name="Hoerlein A."/>
            <person name="Michel G."/>
            <person name="Wedler H."/>
            <person name="Koehrer K."/>
            <person name="Ottenwaelder B."/>
            <person name="Poustka A."/>
            <person name="Wiemann S."/>
            <person name="Schupp I."/>
        </authorList>
    </citation>
    <scope>NUCLEOTIDE SEQUENCE [LARGE SCALE MRNA] (ISOFORM ALPHA)</scope>
</reference>
<reference key="6">
    <citation type="submission" date="2003-05" db="EMBL/GenBank/DDBJ databases">
        <title>Cloning of human full-length CDSs in BD Creator(TM) system donor vector.</title>
        <authorList>
            <person name="Kalnine N."/>
            <person name="Chen X."/>
            <person name="Rolfs A."/>
            <person name="Halleck A."/>
            <person name="Hines L."/>
            <person name="Eisenstein S."/>
            <person name="Koundinya M."/>
            <person name="Raphael J."/>
            <person name="Moreira D."/>
            <person name="Kelley T."/>
            <person name="LaBaer J."/>
            <person name="Lin Y."/>
            <person name="Phelan M."/>
            <person name="Farmer A."/>
        </authorList>
    </citation>
    <scope>NUCLEOTIDE SEQUENCE [LARGE SCALE MRNA] (ISOFORM BETA)</scope>
</reference>
<reference key="7">
    <citation type="journal article" date="2005" name="Nature">
        <title>Generation and annotation of the DNA sequences of human chromosomes 2 and 4.</title>
        <authorList>
            <person name="Hillier L.W."/>
            <person name="Graves T.A."/>
            <person name="Fulton R.S."/>
            <person name="Fulton L.A."/>
            <person name="Pepin K.H."/>
            <person name="Minx P."/>
            <person name="Wagner-McPherson C."/>
            <person name="Layman D."/>
            <person name="Wylie K."/>
            <person name="Sekhon M."/>
            <person name="Becker M.C."/>
            <person name="Fewell G.A."/>
            <person name="Delehaunty K.D."/>
            <person name="Miner T.L."/>
            <person name="Nash W.E."/>
            <person name="Kremitzki C."/>
            <person name="Oddy L."/>
            <person name="Du H."/>
            <person name="Sun H."/>
            <person name="Bradshaw-Cordum H."/>
            <person name="Ali J."/>
            <person name="Carter J."/>
            <person name="Cordes M."/>
            <person name="Harris A."/>
            <person name="Isak A."/>
            <person name="van Brunt A."/>
            <person name="Nguyen C."/>
            <person name="Du F."/>
            <person name="Courtney L."/>
            <person name="Kalicki J."/>
            <person name="Ozersky P."/>
            <person name="Abbott S."/>
            <person name="Armstrong J."/>
            <person name="Belter E.A."/>
            <person name="Caruso L."/>
            <person name="Cedroni M."/>
            <person name="Cotton M."/>
            <person name="Davidson T."/>
            <person name="Desai A."/>
            <person name="Elliott G."/>
            <person name="Erb T."/>
            <person name="Fronick C."/>
            <person name="Gaige T."/>
            <person name="Haakenson W."/>
            <person name="Haglund K."/>
            <person name="Holmes A."/>
            <person name="Harkins R."/>
            <person name="Kim K."/>
            <person name="Kruchowski S.S."/>
            <person name="Strong C.M."/>
            <person name="Grewal N."/>
            <person name="Goyea E."/>
            <person name="Hou S."/>
            <person name="Levy A."/>
            <person name="Martinka S."/>
            <person name="Mead K."/>
            <person name="McLellan M.D."/>
            <person name="Meyer R."/>
            <person name="Randall-Maher J."/>
            <person name="Tomlinson C."/>
            <person name="Dauphin-Kohlberg S."/>
            <person name="Kozlowicz-Reilly A."/>
            <person name="Shah N."/>
            <person name="Swearengen-Shahid S."/>
            <person name="Snider J."/>
            <person name="Strong J.T."/>
            <person name="Thompson J."/>
            <person name="Yoakum M."/>
            <person name="Leonard S."/>
            <person name="Pearman C."/>
            <person name="Trani L."/>
            <person name="Radionenko M."/>
            <person name="Waligorski J.E."/>
            <person name="Wang C."/>
            <person name="Rock S.M."/>
            <person name="Tin-Wollam A.-M."/>
            <person name="Maupin R."/>
            <person name="Latreille P."/>
            <person name="Wendl M.C."/>
            <person name="Yang S.-P."/>
            <person name="Pohl C."/>
            <person name="Wallis J.W."/>
            <person name="Spieth J."/>
            <person name="Bieri T.A."/>
            <person name="Berkowicz N."/>
            <person name="Nelson J.O."/>
            <person name="Osborne J."/>
            <person name="Ding L."/>
            <person name="Meyer R."/>
            <person name="Sabo A."/>
            <person name="Shotland Y."/>
            <person name="Sinha P."/>
            <person name="Wohldmann P.E."/>
            <person name="Cook L.L."/>
            <person name="Hickenbotham M.T."/>
            <person name="Eldred J."/>
            <person name="Williams D."/>
            <person name="Jones T.A."/>
            <person name="She X."/>
            <person name="Ciccarelli F.D."/>
            <person name="Izaurralde E."/>
            <person name="Taylor J."/>
            <person name="Schmutz J."/>
            <person name="Myers R.M."/>
            <person name="Cox D.R."/>
            <person name="Huang X."/>
            <person name="McPherson J.D."/>
            <person name="Mardis E.R."/>
            <person name="Clifton S.W."/>
            <person name="Warren W.C."/>
            <person name="Chinwalla A.T."/>
            <person name="Eddy S.R."/>
            <person name="Marra M.A."/>
            <person name="Ovcharenko I."/>
            <person name="Furey T.S."/>
            <person name="Miller W."/>
            <person name="Eichler E.E."/>
            <person name="Bork P."/>
            <person name="Suyama M."/>
            <person name="Torrents D."/>
            <person name="Waterston R.H."/>
            <person name="Wilson R.K."/>
        </authorList>
    </citation>
    <scope>NUCLEOTIDE SEQUENCE [LARGE SCALE GENOMIC DNA]</scope>
</reference>
<reference key="8">
    <citation type="submission" date="2005-09" db="EMBL/GenBank/DDBJ databases">
        <authorList>
            <person name="Mural R.J."/>
            <person name="Istrail S."/>
            <person name="Sutton G.G."/>
            <person name="Florea L."/>
            <person name="Halpern A.L."/>
            <person name="Mobarry C.M."/>
            <person name="Lippert R."/>
            <person name="Walenz B."/>
            <person name="Shatkay H."/>
            <person name="Dew I."/>
            <person name="Miller J.R."/>
            <person name="Flanigan M.J."/>
            <person name="Edwards N.J."/>
            <person name="Bolanos R."/>
            <person name="Fasulo D."/>
            <person name="Halldorsson B.V."/>
            <person name="Hannenhalli S."/>
            <person name="Turner R."/>
            <person name="Yooseph S."/>
            <person name="Lu F."/>
            <person name="Nusskern D.R."/>
            <person name="Shue B.C."/>
            <person name="Zheng X.H."/>
            <person name="Zhong F."/>
            <person name="Delcher A.L."/>
            <person name="Huson D.H."/>
            <person name="Kravitz S.A."/>
            <person name="Mouchard L."/>
            <person name="Reinert K."/>
            <person name="Remington K.A."/>
            <person name="Clark A.G."/>
            <person name="Waterman M.S."/>
            <person name="Eichler E.E."/>
            <person name="Adams M.D."/>
            <person name="Hunkapiller M.W."/>
            <person name="Myers E.W."/>
            <person name="Venter J.C."/>
        </authorList>
    </citation>
    <scope>NUCLEOTIDE SEQUENCE [LARGE SCALE GENOMIC DNA]</scope>
</reference>
<reference key="9">
    <citation type="journal article" date="2004" name="Genome Res.">
        <title>The status, quality, and expansion of the NIH full-length cDNA project: the Mammalian Gene Collection (MGC).</title>
        <authorList>
            <consortium name="The MGC Project Team"/>
        </authorList>
    </citation>
    <scope>NUCLEOTIDE SEQUENCE [LARGE SCALE MRNA] (ISOFORM BETA)</scope>
    <source>
        <tissue>Brain</tissue>
    </source>
</reference>
<reference key="10">
    <citation type="journal article" date="1995" name="Nucleic Acids Res.">
        <title>The genomic structure of the STAT genes: multiple exons in coincident sites in Stat1 and Stat2.</title>
        <authorList>
            <person name="Yan R."/>
            <person name="Qureshi S."/>
            <person name="Zhong Z."/>
            <person name="Wen Z."/>
            <person name="Darnell J.E. Jr."/>
        </authorList>
    </citation>
    <scope>PARTIAL NUCLEOTIDE SEQUENCE [GENOMIC DNA]</scope>
</reference>
<reference key="11">
    <citation type="journal article" date="1992" name="Cell">
        <title>A transcription factor with SH2 and SH3 domains is directly activated by an interferon alpha-induced cytoplasmic protein tyrosine kinase(s).</title>
        <authorList>
            <person name="Fu X.Y."/>
        </authorList>
    </citation>
    <scope>PHOSPHORYLATION IN RESPONSE TO IFN-ALPHA</scope>
</reference>
<reference key="12">
    <citation type="journal article" date="1994" name="EMBO J.">
        <title>Ligand-induced IFN gamma receptor tyrosine phosphorylation couples the receptor to its signal transduction system (p91).</title>
        <authorList>
            <person name="Greenlund A.C."/>
            <person name="Farrar M.A."/>
            <person name="Viviano B.L."/>
            <person name="Schreiber R.D."/>
        </authorList>
    </citation>
    <scope>FUNCTION</scope>
    <scope>INTERACTION WITH IFNGR1</scope>
</reference>
<reference key="13">
    <citation type="journal article" date="1995" name="Cell">
        <title>Maximal activation of transcription by Stat1 and Stat3 requires both tyrosine and serine phosphorylation.</title>
        <authorList>
            <person name="Wen Z."/>
            <person name="Zhong Z."/>
            <person name="Darnell J.E. Jr."/>
        </authorList>
    </citation>
    <scope>PHOSPHORYLATION AT SER-727</scope>
</reference>
<reference key="14">
    <citation type="journal article" date="1995" name="J. Biol. Chem.">
        <title>Phosphorylation and activation of the DNA binding activity of purified Stat1 by the Janus protein-tyrosine kinases and the epidermal growth factor receptor.</title>
        <authorList>
            <person name="Quelle F.W."/>
            <person name="Thierfelder W."/>
            <person name="Witthuhn B.A."/>
            <person name="Tang B."/>
            <person name="Cohen S."/>
            <person name="Ihle J.N."/>
        </authorList>
    </citation>
    <scope>PHOSPHORYLATION AT TYR-701</scope>
</reference>
<reference key="15">
    <citation type="journal article" date="1996" name="EMBO J.">
        <title>The SH2 domains of Stat1 and Stat2 mediate multiple interactions in the transduction of IFN-alpha signals.</title>
        <authorList>
            <person name="Gupta S."/>
            <person name="Yan H."/>
            <person name="Wong L.H."/>
            <person name="Ralph S."/>
            <person name="Krolewski J."/>
            <person name="Schindler C."/>
        </authorList>
    </citation>
    <scope>TYROSINE PHOSPHORYLATION</scope>
    <scope>HETERODIMERIZATION</scope>
    <scope>DNA-BINDING</scope>
</reference>
<reference key="16">
    <citation type="journal article" date="1997" name="Mol. Cell. Biol.">
        <title>Functional subdomains of STAT2 required for preassociation with the alpha interferon receptor and for signaling.</title>
        <authorList>
            <person name="Li X."/>
            <person name="Leung S."/>
            <person name="Kerr I.M."/>
            <person name="Stark G.R."/>
        </authorList>
    </citation>
    <scope>INTERACTION WITH IFNAR1 AND IFNAR2</scope>
    <scope>PHOSPHORYLATION</scope>
</reference>
<reference key="17">
    <citation type="journal article" date="1998" name="Proc. Natl. Acad. Sci. U.S.A.">
        <title>Inhibition of Stat1-mediated gene activation by PIAS1.</title>
        <authorList>
            <person name="Liu B."/>
            <person name="Liao J."/>
            <person name="Rao X."/>
            <person name="Kushner S.A."/>
            <person name="Chung C.D."/>
            <person name="Chang D.D."/>
            <person name="Shuai K."/>
        </authorList>
    </citation>
    <scope>INTERACTION WITH PIAS1</scope>
    <scope>FUNCTION</scope>
    <source>
        <tissue>B-cell</tissue>
    </source>
</reference>
<reference key="18">
    <citation type="journal article" date="1999" name="Cell">
        <title>Functional association of Nmi with Stat5 and Stat1 in IL-2- and IFNgamma-mediated signaling.</title>
        <authorList>
            <person name="Zhu M.-H."/>
            <person name="John S."/>
            <person name="Berg M."/>
            <person name="Leonard W.J."/>
        </authorList>
    </citation>
    <scope>INTERACTION WITH NMI</scope>
    <scope>IDENTIFICATION IN A COMPLEX WITH NMI AND CREBBP</scope>
</reference>
<reference key="19">
    <citation type="journal article" date="1999" name="Intervirology">
        <title>Viral inhibition of interferon signal transduction.</title>
        <authorList>
            <person name="Cebulla C.M."/>
            <person name="Miller D.M."/>
            <person name="Sedmak D.D."/>
        </authorList>
    </citation>
    <scope>REVIEW</scope>
</reference>
<reference key="20">
    <citation type="journal article" date="2001" name="Genes Cells">
        <title>Sendai virus C protein physically associates with Stat1.</title>
        <authorList>
            <person name="Takeuchi K."/>
            <person name="Komatsu T."/>
            <person name="Yokoo J."/>
            <person name="Kato A."/>
            <person name="Shioda T."/>
            <person name="Nagai Y."/>
            <person name="Gotoh B."/>
        </authorList>
    </citation>
    <scope>INTERACTION WITH SENDAI VIRUS C PROTEIN (MICROBIAL INFECTION)</scope>
</reference>
<reference key="21">
    <citation type="journal article" date="2001" name="J. Biol. Chem.">
        <title>Focal adhesion kinase activates Stat1 in integrin-mediated cell migration and adhesion.</title>
        <authorList>
            <person name="Xie B."/>
            <person name="Zhao J."/>
            <person name="Kitagawa M."/>
            <person name="Durbin J."/>
            <person name="Madri J.A."/>
            <person name="Guan J.L."/>
            <person name="Fu X.Y."/>
        </authorList>
    </citation>
    <scope>INTERACTION WITH PTK2/FAK1</scope>
    <scope>PHOSPHORYLATION</scope>
</reference>
<reference key="22">
    <citation type="journal article" date="2002" name="Mol. Cell. Biol.">
        <title>Identification of a nuclear Stat1 protein tyrosine phosphatase.</title>
        <authorList>
            <person name="ten Hoeve J."/>
            <person name="de Jesus Ibarra-Sanchez M."/>
            <person name="Fu Y."/>
            <person name="Zhu W."/>
            <person name="Tremblay M."/>
            <person name="David M."/>
            <person name="Shuai K."/>
        </authorList>
    </citation>
    <scope>PHOSPHORYLATION</scope>
    <scope>DEPHOSPHORYLATION BY PTPN2</scope>
</reference>
<reference key="23">
    <citation type="journal article" date="2002" name="Proc. Natl. Acad. Sci. U.S.A.">
        <title>Requirement of Ca2+ and CaMKII for Stat1 Ser-727 phosphorylation in response to IFN-gamma.</title>
        <authorList>
            <person name="Nair J.S."/>
            <person name="DaFonseca C.J."/>
            <person name="Tjernberg A."/>
            <person name="Sun W."/>
            <person name="Darnell J.E. Jr."/>
            <person name="Chait B.T."/>
            <person name="Zhang J.J."/>
        </authorList>
    </citation>
    <scope>PHOSPHORYLATION AT SER-727</scope>
</reference>
<reference key="24">
    <citation type="journal article" date="2003" name="Blood">
        <title>PIAS proteins promote SUMO-1 conjugation to STAT1.</title>
        <authorList>
            <person name="Ungureanu D."/>
            <person name="Vanhatupa S."/>
            <person name="Kotaja N."/>
            <person name="Yang J."/>
            <person name="Aittomaeki S."/>
            <person name="Jaenne O.A."/>
            <person name="Palvimo J.J."/>
            <person name="Silvennoinen O."/>
        </authorList>
    </citation>
    <scope>SUMOYLATION AT LYS-703</scope>
    <scope>FUNCTION</scope>
    <scope>MUTAGENESIS OF LYS-703</scope>
</reference>
<reference key="25">
    <citation type="journal article" date="2003" name="J. Biol. Chem.">
        <title>SUMO modification of STAT1 and its role in PIAS-mediated inhibition of gene activation.</title>
        <authorList>
            <person name="Rogers R.S."/>
            <person name="Horvath C.M."/>
            <person name="Matunis M.J."/>
        </authorList>
    </citation>
    <scope>SUMOYLATION AT LYS-703</scope>
    <scope>FUNCTION</scope>
    <scope>MUTAGENESIS OF LYS-110 AND LYS-703</scope>
</reference>
<reference key="26">
    <citation type="journal article" date="2004" name="Cell. Mol. Life Sci.">
        <title>Signal transduction via the stem cell factor receptor/c-Kit.</title>
        <authorList>
            <person name="Ronnstrand L."/>
        </authorList>
    </citation>
    <scope>REVIEW ON ROLE IN KIT SIGNALING</scope>
</reference>
<reference key="27">
    <citation type="journal article" date="2004" name="J. Biol. Chem.">
        <title>Protein kinase Cdelta regulates apoptosis via activation of STAT1.</title>
        <authorList>
            <person name="DeVries T.A."/>
            <person name="Kalkofen R.L."/>
            <person name="Matassa A.A."/>
            <person name="Reyland M.E."/>
        </authorList>
    </citation>
    <scope>PHOSPHORYLATION AT SER-727</scope>
    <scope>FUNCTION</scope>
    <scope>SUBCELLULAR LOCATION</scope>
    <scope>MUTAGENESIS OF SER-727</scope>
</reference>
<reference key="28">
    <citation type="journal article" date="2004" name="J. Virol.">
        <title>Nipah virus V and W proteins have a common STAT1-binding domain yet inhibit STAT1 activation from the cytoplasmic and nuclear compartments, respectively.</title>
        <authorList>
            <person name="Shaw M.L."/>
            <person name="Garcia-Sastre A."/>
            <person name="Palese P."/>
            <person name="Basler C.F."/>
        </authorList>
    </citation>
    <scope>INTERACTION WITH NIPAH V AND W PROTEINS (MICROBIAL INFECTION)</scope>
</reference>
<reference key="29">
    <citation type="journal article" date="2005" name="Biochem. Biophys. Res. Commun.">
        <title>Proteomic identification of proteins conjugated to ISG15 in mouse and human cells.</title>
        <authorList>
            <person name="Giannakopoulos N.V."/>
            <person name="Luo J.K."/>
            <person name="Papov V."/>
            <person name="Zou W."/>
            <person name="Lenschow D.J."/>
            <person name="Jacobs B.S."/>
            <person name="Borden E.C."/>
            <person name="Li J."/>
            <person name="Virgin H.W."/>
            <person name="Zhang D.E."/>
        </authorList>
    </citation>
    <scope>ISGYLATION</scope>
</reference>
<reference key="30">
    <citation type="journal article" date="2005" name="Gastroenterology">
        <title>Hepatitis C virus expression suppresses interferon signaling by degrading STAT1.</title>
        <authorList>
            <person name="Lin W."/>
            <person name="Choe W.H."/>
            <person name="Hiasa Y."/>
            <person name="Kamegaya Y."/>
            <person name="Blackard J.T."/>
            <person name="Schmidt E.V."/>
            <person name="Chung R.T."/>
        </authorList>
    </citation>
    <scope>INTERACTION WITH HEPATITIS C VIRUS CORE PROTEIN (MICROBIAL INFECTION)</scope>
</reference>
<reference key="31">
    <citation type="journal article" date="2005" name="J. Biol. Chem.">
        <title>The conserved Leu-724 residue is required for both serine phosphorylation and co-activator recruitment for Stat1-mediated transcription activation in response to interferon-gamma.</title>
        <authorList>
            <person name="Sun W."/>
            <person name="Xu W."/>
            <person name="Snyder M."/>
            <person name="He W."/>
            <person name="Ho H."/>
            <person name="Ivashkiv L.B."/>
            <person name="Zhang J.J."/>
        </authorList>
    </citation>
    <scope>FUNCTION</scope>
    <scope>INTERACTION WITH EP300</scope>
    <scope>PHOSPHORYLATION AT SER-727</scope>
    <scope>MUTAGENESIS OF LEU-724</scope>
</reference>
<reference key="32">
    <citation type="journal article" date="2006" name="Oncogene">
        <title>Serine-phosphorylated STAT1 is a prosurvival factor in Wilms' tumor pathogenesis.</title>
        <authorList>
            <person name="Timofeeva O.A."/>
            <person name="Plisov S."/>
            <person name="Evseev A.A."/>
            <person name="Peng S."/>
            <person name="Jose-Kampfner M."/>
            <person name="Lovvorn H.N."/>
            <person name="Dome J.S."/>
            <person name="Perantoni A.O."/>
        </authorList>
    </citation>
    <scope>PHOSPHORYLATION AT SER-727</scope>
</reference>
<reference key="33">
    <citation type="journal article" date="2007" name="Bone">
        <title>Sustained phosphorylation of mutated FGFR3 is a crucial feature of genetic dwarfism and induces apoptosis in the ATDC5 chondrogenic cell line via PLCgamma-activated STAT1.</title>
        <authorList>
            <person name="Harada D."/>
            <person name="Yamanaka Y."/>
            <person name="Ueda K."/>
            <person name="Nishimura R."/>
            <person name="Morishima T."/>
            <person name="Seino Y."/>
            <person name="Tanaka H."/>
        </authorList>
    </citation>
    <scope>PHOSPHORYLATION IN RESPONSE TO ACTIVATED FGFR3</scope>
    <scope>PHOSPHORYLATION AT TYR-701</scope>
</reference>
<reference key="34">
    <citation type="journal article" date="2007" name="J. Cell. Physiol.">
        <title>Fibroblast growth factor receptor-induced phosphorylation of STAT1 at the Golgi apparatus without translocation to the nucleus.</title>
        <authorList>
            <person name="Citores L."/>
            <person name="Bai L."/>
            <person name="Sorensen V."/>
            <person name="Olsnes S."/>
        </authorList>
    </citation>
    <scope>PHOSPHORYLATION IN RESPONSE TO ACTIVATED FGFR1; FGFR2; FGFR3 AND FGFR4</scope>
</reference>
<reference key="35">
    <citation type="journal article" date="2008" name="Biochem. J.">
        <title>MAPK-induced Ser727 phosphorylation promotes SUMOylation of STAT1.</title>
        <authorList>
            <person name="Vanhatupa S."/>
            <person name="Ungureanu D."/>
            <person name="Paakkunainen M."/>
            <person name="Silvennoinen O."/>
        </authorList>
    </citation>
    <scope>PHOSPHORYLATION AT SER-727</scope>
    <scope>INTERACTION WITH PIAS1</scope>
    <scope>SUMOYLATION</scope>
    <scope>MUTAGENESIS OF TYR-701 AND SER-727</scope>
</reference>
<reference key="36">
    <citation type="journal article" date="2008" name="Chem. Biol.">
        <title>System-wide investigation of ErbB4 reveals 19 sites of Tyr phosphorylation that are unusually selective in their recruitment properties.</title>
        <authorList>
            <person name="Kaushansky A."/>
            <person name="Gordus A."/>
            <person name="Budnik B.A."/>
            <person name="Lane W.S."/>
            <person name="Rush J."/>
            <person name="MacBeath G."/>
        </authorList>
    </citation>
    <scope>INTERACTION WITH ERBB4</scope>
</reference>
<reference key="37">
    <citation type="journal article" date="2008" name="Mol. Cell">
        <title>Kinase-selective enrichment enables quantitative phosphoproteomics of the kinome across the cell cycle.</title>
        <authorList>
            <person name="Daub H."/>
            <person name="Olsen J.V."/>
            <person name="Bairlein M."/>
            <person name="Gnad F."/>
            <person name="Oppermann F.S."/>
            <person name="Korner R."/>
            <person name="Greff Z."/>
            <person name="Keri G."/>
            <person name="Stemmann O."/>
            <person name="Mann M."/>
        </authorList>
    </citation>
    <scope>PHOSPHORYLATION [LARGE SCALE ANALYSIS] AT SER-727</scope>
    <scope>IDENTIFICATION BY MASS SPECTROMETRY [LARGE SCALE ANALYSIS]</scope>
    <source>
        <tissue>Cervix carcinoma</tissue>
    </source>
</reference>
<reference key="38">
    <citation type="journal article" date="2008" name="PLoS ONE">
        <title>Analysis of STAT1 activation by six FGFR3 mutants associated with skeletal dysplasia undermines dominant role of STAT1 in FGFR3 signaling in cartilage.</title>
        <authorList>
            <person name="Krejci P."/>
            <person name="Salazar L."/>
            <person name="Kashiwada T.A."/>
            <person name="Chlebova K."/>
            <person name="Salasova A."/>
            <person name="Thompson L.M."/>
            <person name="Bryja V."/>
            <person name="Kozubik A."/>
            <person name="Wilcox W.R."/>
        </authorList>
    </citation>
    <scope>FUNCTION</scope>
    <scope>PHOSPHORYLATION AT TYR-701 IN RESPONSE TO CONSTITUTIVELY ACTIVATED FGFR3</scope>
</reference>
<reference key="39">
    <citation type="journal article" date="2008" name="Proc. Natl. Acad. Sci. U.S.A.">
        <title>A quantitative atlas of mitotic phosphorylation.</title>
        <authorList>
            <person name="Dephoure N."/>
            <person name="Zhou C."/>
            <person name="Villen J."/>
            <person name="Beausoleil S.A."/>
            <person name="Bakalarski C.E."/>
            <person name="Elledge S.J."/>
            <person name="Gygi S.P."/>
        </authorList>
    </citation>
    <scope>PHOSPHORYLATION [LARGE SCALE ANALYSIS] AT SER-727</scope>
    <scope>IDENTIFICATION BY MASS SPECTROMETRY [LARGE SCALE ANALYSIS]</scope>
    <source>
        <tissue>Cervix carcinoma</tissue>
    </source>
</reference>
<reference key="40">
    <citation type="journal article" date="2009" name="Genes Dev.">
        <title>PRMT1-mediated arginine methylation of PIAS1 regulates STAT1 signaling.</title>
        <authorList>
            <person name="Weber S."/>
            <person name="Maass F."/>
            <person name="Schuemann M."/>
            <person name="Krause E."/>
            <person name="Suske G."/>
            <person name="Bauer U.M."/>
        </authorList>
    </citation>
    <scope>RETRACTED PAPER</scope>
</reference>
<reference key="41">
    <citation type="journal article" date="2011" name="Genes Dev.">
        <title>Retraction. PRMT1-mediated arginine methylation of PIAS1 regulates STAT1 signaling.</title>
        <authorList>
            <person name="Weber S."/>
            <person name="Maass F."/>
            <person name="Schuemann M."/>
            <person name="Krause E."/>
            <person name="Suske G."/>
            <person name="Bauer U.M."/>
        </authorList>
    </citation>
    <scope>RETRACTION NOTICE OF PUBMED:19136629</scope>
</reference>
<reference key="42">
    <citation type="journal article" date="2009" name="Sci. Signal.">
        <title>Quantitative phosphoproteomic analysis of T cell receptor signaling reveals system-wide modulation of protein-protein interactions.</title>
        <authorList>
            <person name="Mayya V."/>
            <person name="Lundgren D.H."/>
            <person name="Hwang S.-I."/>
            <person name="Rezaul K."/>
            <person name="Wu L."/>
            <person name="Eng J.K."/>
            <person name="Rodionov V."/>
            <person name="Han D.K."/>
        </authorList>
    </citation>
    <scope>PHOSPHORYLATION [LARGE SCALE ANALYSIS] AT SER-727</scope>
    <scope>IDENTIFICATION BY MASS SPECTROMETRY [LARGE SCALE ANALYSIS]</scope>
    <source>
        <tissue>Leukemic T-cell</tissue>
    </source>
</reference>
<reference key="43">
    <citation type="journal article" date="2010" name="Sci. Signal.">
        <title>Quantitative phosphoproteomics reveals widespread full phosphorylation site occupancy during mitosis.</title>
        <authorList>
            <person name="Olsen J.V."/>
            <person name="Vermeulen M."/>
            <person name="Santamaria A."/>
            <person name="Kumar C."/>
            <person name="Miller M.L."/>
            <person name="Jensen L.J."/>
            <person name="Gnad F."/>
            <person name="Cox J."/>
            <person name="Jensen T.S."/>
            <person name="Nigg E.A."/>
            <person name="Brunak S."/>
            <person name="Mann M."/>
        </authorList>
    </citation>
    <scope>PHOSPHORYLATION [LARGE SCALE ANALYSIS] AT SER-727</scope>
    <scope>IDENTIFICATION BY MASS SPECTROMETRY [LARGE SCALE ANALYSIS]</scope>
    <source>
        <tissue>Cervix carcinoma</tissue>
    </source>
</reference>
<reference key="44">
    <citation type="journal article" date="2011" name="BMC Syst. Biol.">
        <title>Initial characterization of the human central proteome.</title>
        <authorList>
            <person name="Burkard T.R."/>
            <person name="Planyavsky M."/>
            <person name="Kaupe I."/>
            <person name="Breitwieser F.P."/>
            <person name="Buerckstuemmer T."/>
            <person name="Bennett K.L."/>
            <person name="Superti-Furga G."/>
            <person name="Colinge J."/>
        </authorList>
    </citation>
    <scope>IDENTIFICATION BY MASS SPECTROMETRY [LARGE SCALE ANALYSIS]</scope>
</reference>
<reference key="45">
    <citation type="journal article" date="2011" name="J. Biol. Chem.">
        <title>Mechanisms of STAT protein activation by oncogenic KIT mutants in neoplastic mast cells.</title>
        <authorList>
            <person name="Chaix A."/>
            <person name="Lopez S."/>
            <person name="Voisset E."/>
            <person name="Gros L."/>
            <person name="Dubreuil P."/>
            <person name="De Sepulveda P."/>
        </authorList>
    </citation>
    <scope>PHOSPHORYLATION AT TYR-701 IN RESPONSE TO KIT SIGNALING</scope>
    <scope>PHOSPHORYLATION AT SER-727</scope>
</reference>
<reference key="46">
    <citation type="journal article" date="2011" name="J. Biol. Chem.">
        <title>Inhibitor of kappaB kinase epsilon (IKK(epsilon)), STAT1, and IFIT2 proteins define novel innate immune effector pathway against West Nile virus infection.</title>
        <authorList>
            <person name="Perwitasari O."/>
            <person name="Cho H."/>
            <person name="Diamond M.S."/>
            <person name="Gale M. Jr."/>
        </authorList>
    </citation>
    <scope>PHOSPHORYLATION AT TYR-701; SER-708 AND SER-727</scope>
    <scope>MUTAGENESIS OF TYR-701; SER-708 AND SER-727</scope>
</reference>
<reference key="47">
    <citation type="journal article" date="2012" name="PLoS Pathog.">
        <title>The ebola virus interferon antagonist VP24 directly binds STAT1 and has a novel, pyramidal fold.</title>
        <authorList>
            <person name="Zhang A.P."/>
            <person name="Bornholdt Z.A."/>
            <person name="Liu T."/>
            <person name="Abelson D.M."/>
            <person name="Lee D.E."/>
            <person name="Li S."/>
            <person name="Woods V.L. Jr."/>
            <person name="Saphire E.O."/>
        </authorList>
    </citation>
    <scope>INTERACTION WITH EBOLAVIRUS PROTEIN VP24 (MICROBIAL INFECTION)</scope>
</reference>
<reference key="48">
    <citation type="journal article" date="2012" name="Mol. Cell. Proteomics">
        <title>Comparative large-scale characterisation of plant vs. mammal proteins reveals similar and idiosyncratic N-alpha acetylation features.</title>
        <authorList>
            <person name="Bienvenut W.V."/>
            <person name="Sumpton D."/>
            <person name="Martinez A."/>
            <person name="Lilla S."/>
            <person name="Espagne C."/>
            <person name="Meinnel T."/>
            <person name="Giglione C."/>
        </authorList>
    </citation>
    <scope>ACETYLATION [LARGE SCALE ANALYSIS] AT SER-2</scope>
    <scope>CLEAVAGE OF INITIATOR METHIONINE [LARGE SCALE ANALYSIS]</scope>
    <scope>IDENTIFICATION BY MASS SPECTROMETRY [LARGE SCALE ANALYSIS]</scope>
</reference>
<reference key="49">
    <citation type="journal article" date="2013" name="J. Immunol.">
        <title>Ubiquitin-specific protease 13 regulates IFN signaling by stabilizing STAT1.</title>
        <authorList>
            <person name="Yeh H.M."/>
            <person name="Yu C.Y."/>
            <person name="Yang H.C."/>
            <person name="Ko S.H."/>
            <person name="Liao C.L."/>
            <person name="Lin Y.L."/>
        </authorList>
    </citation>
    <scope>FUNCTION</scope>
    <scope>DEUBIQUITINATION BY USP13</scope>
</reference>
<reference key="50">
    <citation type="journal article" date="2013" name="J. Proteome Res.">
        <title>Toward a comprehensive characterization of a human cancer cell phosphoproteome.</title>
        <authorList>
            <person name="Zhou H."/>
            <person name="Di Palma S."/>
            <person name="Preisinger C."/>
            <person name="Peng M."/>
            <person name="Polat A.N."/>
            <person name="Heck A.J."/>
            <person name="Mohammed S."/>
        </authorList>
    </citation>
    <scope>PHOSPHORYLATION [LARGE SCALE ANALYSIS] AT SER-727</scope>
    <scope>IDENTIFICATION BY MASS SPECTROMETRY [LARGE SCALE ANALYSIS]</scope>
    <source>
        <tissue>Cervix carcinoma</tissue>
        <tissue>Erythroleukemia</tissue>
    </source>
</reference>
<reference key="51">
    <citation type="journal article" date="2014" name="J. Proteomics">
        <title>An enzyme assisted RP-RPLC approach for in-depth analysis of human liver phosphoproteome.</title>
        <authorList>
            <person name="Bian Y."/>
            <person name="Song C."/>
            <person name="Cheng K."/>
            <person name="Dong M."/>
            <person name="Wang F."/>
            <person name="Huang J."/>
            <person name="Sun D."/>
            <person name="Wang L."/>
            <person name="Ye M."/>
            <person name="Zou H."/>
        </authorList>
    </citation>
    <scope>IDENTIFICATION BY MASS SPECTROMETRY [LARGE SCALE ANALYSIS]</scope>
    <source>
        <tissue>Liver</tissue>
    </source>
</reference>
<reference key="52">
    <citation type="journal article" date="2014" name="Proc. Natl. Acad. Sci. U.S.A.">
        <title>Mapping of SUMO sites and analysis of SUMOylation changes induced by external stimuli.</title>
        <authorList>
            <person name="Impens F."/>
            <person name="Radoshevich L."/>
            <person name="Cossart P."/>
            <person name="Ribet D."/>
        </authorList>
    </citation>
    <scope>SUMOYLATION [LARGE SCALE ANALYSIS] AT LYS-703</scope>
    <scope>IDENTIFICATION BY MASS SPECTROMETRY [LARGE SCALE ANALYSIS]</scope>
</reference>
<reference key="53">
    <citation type="journal article" date="2015" name="Nat. Immunol.">
        <title>PARP9-DTX3L ubiquitin ligase targets host histone H2BJ and viral 3C protease to enhance interferon signaling and control viral infection.</title>
        <authorList>
            <person name="Zhang Y."/>
            <person name="Mao D."/>
            <person name="Roswit W.T."/>
            <person name="Jin X."/>
            <person name="Patel A.C."/>
            <person name="Patel D.A."/>
            <person name="Agapov E."/>
            <person name="Wang Z."/>
            <person name="Tidwell R.M."/>
            <person name="Atkinson J.J."/>
            <person name="Huang G."/>
            <person name="McCarthy R."/>
            <person name="Yu J."/>
            <person name="Yun N.E."/>
            <person name="Paessler S."/>
            <person name="Lawson T.G."/>
            <person name="Omattage N.S."/>
            <person name="Brett T.J."/>
            <person name="Holtzman M.J."/>
        </authorList>
    </citation>
    <scope>FUNCTION</scope>
    <scope>INTERACTION WITH PARP9; DTX3L AND EP300</scope>
    <scope>IDENTIFICATION IN A COMPLEX WITH PARP9 AND DTX3L</scope>
    <scope>SUBCELLULAR LOCATION</scope>
    <scope>PHOSPHORYLATION AT TYR-701 AND SER-727</scope>
    <scope>MUTAGENESIS OF 656-ALA--ASN-658 AND TYR-701</scope>
</reference>
<reference key="54">
    <citation type="journal article" date="2016" name="Nat. Commun.">
        <title>PARP9 and PARP14 cross-regulate macrophage activation via STAT1 ADP-ribosylation.</title>
        <authorList>
            <person name="Iwata H."/>
            <person name="Goettsch C."/>
            <person name="Sharma A."/>
            <person name="Ricchiuto P."/>
            <person name="Goh W.W."/>
            <person name="Halu A."/>
            <person name="Yamada I."/>
            <person name="Yoshida H."/>
            <person name="Hara T."/>
            <person name="Wei M."/>
            <person name="Inoue N."/>
            <person name="Fukuda D."/>
            <person name="Mojcher A."/>
            <person name="Mattson P.C."/>
            <person name="Barabasi A.L."/>
            <person name="Boothby M."/>
            <person name="Aikawa E."/>
            <person name="Singh S.A."/>
            <person name="Aikawa M."/>
        </authorList>
    </citation>
    <scope>SUBCELLULAR LOCATION</scope>
    <scope>PHOSPHORYLATION AT TYR-701</scope>
    <scope>ADP-RIBOSYLATION AT GLU-657 AND GLU-705</scope>
    <scope>MUTAGENESIS OF GLU-657 AND GLU-705</scope>
</reference>
<reference key="55">
    <citation type="journal article" date="2017" name="Cell">
        <title>Methyltransferase SETD2-mediated methylation of STAT1 is critical for interferon antiviral activity.</title>
        <authorList>
            <person name="Chen K."/>
            <person name="Liu J."/>
            <person name="Liu S."/>
            <person name="Xia M."/>
            <person name="Zhang X."/>
            <person name="Han D."/>
            <person name="Jiang Y."/>
            <person name="Wang C."/>
            <person name="Cao X."/>
        </authorList>
    </citation>
    <scope>METHYLATION AT LYS-114; LYS-175; LYS-296; LYS-366; LYS-525; LYS-637 AND LYS-665</scope>
    <scope>PHOSPHORYLATION AT TYR-701</scope>
    <scope>FUNCTION</scope>
    <scope>SUBCELLULAR LOCATION</scope>
    <scope>SUBUNIT</scope>
    <scope>MUTAGENESIS OF LYS-114; LYS-175; LYS-296; LYS-366; LYS-525; 636-LYS-LYS-637 AND LYS-665</scope>
</reference>
<reference key="56">
    <citation type="journal article" date="2017" name="Nat. Struct. Mol. Biol.">
        <title>Site-specific mapping of the human SUMO proteome reveals co-modification with phosphorylation.</title>
        <authorList>
            <person name="Hendriks I.A."/>
            <person name="Lyon D."/>
            <person name="Young C."/>
            <person name="Jensen L.J."/>
            <person name="Vertegaal A.C."/>
            <person name="Nielsen M.L."/>
        </authorList>
    </citation>
    <scope>SUMOYLATION [LARGE SCALE ANALYSIS] AT LYS-703</scope>
    <scope>IDENTIFICATION BY MASS SPECTROMETRY [LARGE SCALE ANALYSIS]</scope>
</reference>
<reference key="57">
    <citation type="journal article" date="2018" name="Nat. Commun.">
        <title>On the role of STAT1 and STAT6 ADP-ribosylation in the regulation of macrophage activation.</title>
        <authorList>
            <person name="Begitt A."/>
            <person name="Cavey J."/>
            <person name="Droescher M."/>
            <person name="Vinkemeier U."/>
        </authorList>
    </citation>
    <scope>COMMENT ON ADP-RIBOSYLATION</scope>
</reference>
<reference key="58">
    <citation type="journal article" date="2020" name="J. Immunol.">
        <title>Herpes Simplex Virus Type 2 Inhibits Type I IFN Signaling Mediated by the Novel E3 Ubiquitin Protein Ligase Activity of Viral Protein ICP22.</title>
        <authorList>
            <person name="Zhang M."/>
            <person name="Fu M."/>
            <person name="Li M."/>
            <person name="Hu H."/>
            <person name="Gong S."/>
            <person name="Hu Q."/>
        </authorList>
    </citation>
    <scope>UBIQUITINATION BY HERPES SIMPLEX VIRUS 2 PROTEIN ICP22 (MICROBIAL INFECTION)</scope>
</reference>
<reference key="59">
    <citation type="journal article" date="2020" name="J. Virol.">
        <title>The Measles Virus V Protein Binding Site to STAT2 Overlaps That of IRF9.</title>
        <authorList>
            <person name="Nagano Y."/>
            <person name="Sugiyama A."/>
            <person name="Kimoto M."/>
            <person name="Wakahara T."/>
            <person name="Noguchi Y."/>
            <person name="Jiang X."/>
            <person name="Saijo S."/>
            <person name="Shimizu N."/>
            <person name="Yabuno N."/>
            <person name="Yao M."/>
            <person name="Gooley P.R."/>
            <person name="Moseley G.W."/>
            <person name="Tadokoro T."/>
            <person name="Maenaka K."/>
            <person name="Ose T."/>
        </authorList>
    </citation>
    <scope>INTERACTION WITH MEASLES VIRUS V PROTEIN (MICROBIAL INFECTION)</scope>
</reference>
<reference key="60">
    <citation type="journal article" date="2020" name="Sci. Signal.">
        <title>Noncanonical STAT1 phosphorylation expands its transcriptional activity into promoting LPS-induced IL-6 and IL-12p40 production.</title>
        <authorList>
            <person name="Metwally H."/>
            <person name="Tanaka T."/>
            <person name="Li S."/>
            <person name="Parajuli G."/>
            <person name="Kang S."/>
            <person name="Hanieh H."/>
            <person name="Hashimoto S."/>
            <person name="Chalise J.P."/>
            <person name="Gemechu Y."/>
            <person name="Standley D.M."/>
            <person name="Kishimoto T."/>
        </authorList>
    </citation>
    <scope>FUNCTION</scope>
    <scope>SUBCELLULAR LOCATION</scope>
    <scope>PHOSPHORYLATION AT THR-749</scope>
    <scope>MUTAGENESIS OF TYR-701; THR-704; SER-708; SER-710; SER-715; THR-719; THR-720; SER-727; SER-735; SER-740; SER-745 AND THR-749</scope>
</reference>
<reference key="61">
    <citation type="journal article" date="2021" name="Exp. Cell Res.">
        <title>Interleukin-35 inhibits lipopolysaccharide-induced endothelial cell activation by downregulating inflammation and apoptosis.</title>
        <authorList>
            <person name="Li M."/>
            <person name="Liu Y."/>
            <person name="Fu Y."/>
            <person name="Gong R."/>
            <person name="Xia H."/>
            <person name="Huang X."/>
            <person name="Wu Y."/>
        </authorList>
    </citation>
    <scope>FUNCTION</scope>
    <scope>INTERACTION WITH STAT4</scope>
</reference>
<reference key="62">
    <citation type="journal article" date="2021" name="J. Virol.">
        <title>Suppression of JAK-STAT Signaling by Epstein-Barr Virus Tegument Protein BGLF2 through Recruitment of SHP1 Phosphatase and Promotion of STAT2 Degradation.</title>
        <authorList>
            <person name="Jangra S."/>
            <person name="Bharti A."/>
            <person name="Lui W.Y."/>
            <person name="Chaudhary V."/>
            <person name="Botelho M.G."/>
            <person name="Yuen K.S."/>
            <person name="Jin D.Y."/>
        </authorList>
    </citation>
    <scope>INTERACTION WITH EPSTEIN-BARR VIRUS TEGUMENT PROTEIN BGLF2 (MICROBIAL INFECTION)</scope>
</reference>
<reference key="63">
    <citation type="journal article" date="2022" name="Cell">
        <title>A family of conserved bacterial virulence factors dampens interferon responses by blocking calcium signaling.</title>
        <authorList>
            <person name="Alphonse N."/>
            <person name="Wanford J.J."/>
            <person name="Voak A.A."/>
            <person name="Gay J."/>
            <person name="Venkhaya S."/>
            <person name="Burroughs O."/>
            <person name="Mathew S."/>
            <person name="Lee T."/>
            <person name="Evans S.L."/>
            <person name="Zhao W."/>
            <person name="Frowde K."/>
            <person name="Alrehaili A."/>
            <person name="Dickenson R.E."/>
            <person name="Munk M."/>
            <person name="Panina S."/>
            <person name="Mahmood I.F."/>
            <person name="Llorian M."/>
            <person name="Stanifer M.L."/>
            <person name="Boulant S."/>
            <person name="Berchtold M.W."/>
            <person name="Bergeron J.R.C."/>
            <person name="Wack A."/>
            <person name="Lesser C.F."/>
            <person name="Odendall C."/>
        </authorList>
    </citation>
    <scope>FUNCTION</scope>
    <scope>PHOSPHORYLATION</scope>
</reference>
<reference key="64">
    <citation type="journal article" date="2024" name="Proc. Natl. Acad. Sci. U.S.A.">
        <title>Threonine phosphorylation of STAT1 restricts interferon signaling and promotes innate inflammatory responses.</title>
        <authorList>
            <person name="Metwally H."/>
            <person name="Elbrashy M.M."/>
            <person name="Ozawa T."/>
            <person name="Okuyama K."/>
            <person name="White J.T."/>
            <person name="Tulyeu J."/>
            <person name="Soendergaard J.N."/>
            <person name="Wing J.B."/>
            <person name="Muratsu A."/>
            <person name="Matsumoto H."/>
            <person name="Ikawa M."/>
            <person name="Kishi H."/>
            <person name="Taniuchi I."/>
            <person name="Kishimoto T."/>
        </authorList>
    </citation>
    <scope>PHOSPHORYLATION AT TYR-701; SER-727 AND THR-749</scope>
    <scope>MUTAGENESIS OF THR-749</scope>
</reference>
<reference key="65">
    <citation type="journal article" date="1998" name="Cell">
        <title>Crystal structure of a tyrosine phosphorylated STAT-1 dimer bound to DNA.</title>
        <authorList>
            <person name="Chen X."/>
            <person name="Vinkemeier U."/>
            <person name="Zhao Y."/>
            <person name="Jeruzalmi D."/>
            <person name="Darnell J.E. Jr."/>
            <person name="Kuriyan J."/>
        </authorList>
    </citation>
    <scope>X-RAY CRYSTALLOGRAPHY (2.9 ANGSTROMS) OF 136-710</scope>
    <scope>COILED-COIL</scope>
</reference>
<reference key="66">
    <citation type="journal article" date="2001" name="Science">
        <title>Impairment of mycobacterial but not viral immunity by a germline human STAT1 mutation.</title>
        <authorList>
            <person name="Dupuis S."/>
            <person name="Dargemont C."/>
            <person name="Fieschi C."/>
            <person name="Thomassin N."/>
            <person name="Rosenzweig S."/>
            <person name="Harris J."/>
            <person name="Holland S.M."/>
            <person name="Schreiber R.D."/>
            <person name="Casanova J.-L."/>
        </authorList>
    </citation>
    <scope>VARIANT IMD31A SER-706</scope>
</reference>
<reference key="67">
    <citation type="journal article" date="2003" name="Nat. Genet.">
        <title>Impaired response to interferon-alpha/beta and lethal viral disease in human STAT1 deficiency.</title>
        <authorList>
            <person name="Dupuis S."/>
            <person name="Jouanguy E."/>
            <person name="Al-Hajjar S."/>
            <person name="Fieschi C."/>
            <person name="Al-Mohsen I.Z."/>
            <person name="Al-Jumaah S."/>
            <person name="Yang K."/>
            <person name="Chapgier A."/>
            <person name="Eidenschenk C."/>
            <person name="Eid P."/>
            <person name="Al-Ghonaium A."/>
            <person name="Tufenkeji H."/>
            <person name="Frayha H."/>
            <person name="Al-Gazlan S."/>
            <person name="Al-Rayes H."/>
            <person name="Schreiber R.D."/>
            <person name="Gresser I."/>
            <person name="Casanova J.L."/>
        </authorList>
    </citation>
    <scope>VARIANT IMD31B PRO-600</scope>
</reference>
<reference key="68">
    <citation type="journal article" date="2006" name="PLoS Genet.">
        <title>Novel STAT1 alleles in otherwise healthy patients with mycobacterial disease.</title>
        <authorList>
            <person name="Chapgier A."/>
            <person name="Boisson-Dupuis S."/>
            <person name="Jouanguy E."/>
            <person name="Vogt G."/>
            <person name="Feinberg J."/>
            <person name="Prochnicka-Chalufour A."/>
            <person name="Casrouge A."/>
            <person name="Yang K."/>
            <person name="Soudais C."/>
            <person name="Fieschi C."/>
            <person name="Santos O.F."/>
            <person name="Bustamante J."/>
            <person name="Picard C."/>
            <person name="de Beaucoudrey L."/>
            <person name="Emile J.F."/>
            <person name="Arkwright P.D."/>
            <person name="Schreiber R.D."/>
            <person name="Rolinck-Werninghaus C."/>
            <person name="Rosen-Wolff A."/>
            <person name="Magdorf K."/>
            <person name="Roesler J."/>
            <person name="Casanova J.L."/>
        </authorList>
    </citation>
    <scope>VARIANTS IMD31A GLN-320 AND HIS-463</scope>
    <scope>CHARACTERIZATION OF VARIANTS GLN-320; HIS-463 AND SER-706</scope>
</reference>
<reference key="69">
    <citation type="journal article" date="2006" name="Science">
        <title>The consensus coding sequences of human breast and colorectal cancers.</title>
        <authorList>
            <person name="Sjoeblom T."/>
            <person name="Jones S."/>
            <person name="Wood L.D."/>
            <person name="Parsons D.W."/>
            <person name="Lin J."/>
            <person name="Barber T.D."/>
            <person name="Mandelker D."/>
            <person name="Leary R.J."/>
            <person name="Ptak J."/>
            <person name="Silliman N."/>
            <person name="Szabo S."/>
            <person name="Buckhaults P."/>
            <person name="Farrell C."/>
            <person name="Meeh P."/>
            <person name="Markowitz S.D."/>
            <person name="Willis J."/>
            <person name="Dawson D."/>
            <person name="Willson J.K.V."/>
            <person name="Gazdar A.F."/>
            <person name="Hartigan J."/>
            <person name="Wu L."/>
            <person name="Liu C."/>
            <person name="Parmigiani G."/>
            <person name="Park B.H."/>
            <person name="Bachman K.E."/>
            <person name="Papadopoulos N."/>
            <person name="Vogelstein B."/>
            <person name="Kinzler K.W."/>
            <person name="Velculescu V.E."/>
        </authorList>
    </citation>
    <scope>VARIANT [LARGE SCALE ANALYSIS] ALA-491</scope>
</reference>
<reference key="70">
    <citation type="journal article" date="2007" name="Virology">
        <title>Measles virus V protein blocks Jak1-mediated phosphorylation of STAT1 to escape IFN-alpha/beta signaling.</title>
        <authorList>
            <consortium name="Infectious Mapping Project I-MAP"/>
            <person name="Caignard G."/>
            <person name="Guerbois M."/>
            <person name="Labernardiere J.L."/>
            <person name="Jacob Y."/>
            <person name="Jones L.M."/>
            <person name="Wild F."/>
            <person name="Tangy F."/>
            <person name="Vidalain P.O."/>
        </authorList>
    </citation>
    <scope>INTERACTION WITH HOST STAT1 (MICROBIAL INFECTION)</scope>
</reference>
<reference key="71">
    <citation type="journal article" date="2010" name="Blood">
        <title>A novel form of human STAT1 deficiency impairing early but not late responses to interferons.</title>
        <authorList>
            <person name="Kong X.F."/>
            <person name="Ciancanelli M."/>
            <person name="Al-Hajjar S."/>
            <person name="Alsina L."/>
            <person name="Zumwalt T."/>
            <person name="Bustamante J."/>
            <person name="Feinberg J."/>
            <person name="Audry M."/>
            <person name="Prando C."/>
            <person name="Bryant V."/>
            <person name="Kreins A."/>
            <person name="Bogunovic D."/>
            <person name="Halwani R."/>
            <person name="Zhang X.X."/>
            <person name="Abel L."/>
            <person name="Chaussabel D."/>
            <person name="Al-Muhsen S."/>
            <person name="Casanova J.L."/>
            <person name="Boisson-Dupuis S."/>
        </authorList>
    </citation>
    <scope>VARIANT IMD31B ASN-201</scope>
    <scope>CHARACTERIZATION OF VARIANT IMD31B ASN-201</scope>
</reference>
<reference key="72">
    <citation type="journal article" date="2011" name="J. Exp. Med.">
        <title>Gain-of-function human STAT1 mutations impair IL-17 immunity and underlie chronic mucocutaneous candidiasis.</title>
        <authorList>
            <person name="Liu L."/>
            <person name="Okada S."/>
            <person name="Kong X.F."/>
            <person name="Kreins A.Y."/>
            <person name="Cypowyj S."/>
            <person name="Abhyankar A."/>
            <person name="Toubiana J."/>
            <person name="Itan Y."/>
            <person name="Audry M."/>
            <person name="Nitschke P."/>
            <person name="Masson C."/>
            <person name="Toth B."/>
            <person name="Flatot J."/>
            <person name="Migaud M."/>
            <person name="Chrabieh M."/>
            <person name="Kochetkov T."/>
            <person name="Bolze A."/>
            <person name="Borghesi A."/>
            <person name="Toulon A."/>
            <person name="Hiller J."/>
            <person name="Eyerich S."/>
            <person name="Eyerich K."/>
            <person name="Gulacsy V."/>
            <person name="Chernyshova L."/>
            <person name="Chernyshov V."/>
            <person name="Bondarenko A."/>
            <person name="Maria Cortes Grimaldo R."/>
            <person name="Blancas-Galicia L."/>
            <person name="Madrigal Beas I.M."/>
            <person name="Roesler J."/>
            <person name="Magdorf K."/>
            <person name="Engelhard D."/>
            <person name="Thumerelle C."/>
            <person name="Burgel P.R."/>
            <person name="Hoernes M."/>
            <person name="Drexel B."/>
            <person name="Seger R."/>
            <person name="Kusuma T."/>
            <person name="Jansson A.F."/>
            <person name="Sawalle-Belohradsky J."/>
            <person name="Belohradsky B."/>
            <person name="Jouanguy E."/>
            <person name="Bustamante J."/>
            <person name="Bue M."/>
            <person name="Karin N."/>
            <person name="Wildbaum G."/>
            <person name="Bodemer C."/>
            <person name="Lortholary O."/>
            <person name="Fischer A."/>
            <person name="Blanche S."/>
            <person name="Al-Muhsen S."/>
            <person name="Reichenbach J."/>
            <person name="Kobayashi M."/>
            <person name="Rosales F.E."/>
            <person name="Lozano C.T."/>
            <person name="Kilic S.S."/>
            <person name="Oleastro M."/>
            <person name="Etzioni A."/>
            <person name="Traidl-Hoffmann C."/>
            <person name="Renner E.D."/>
            <person name="Abel L."/>
            <person name="Picard C."/>
            <person name="Marodi L."/>
            <person name="Boisson-Dupuis S."/>
            <person name="Puel A."/>
            <person name="Casanova J.L."/>
        </authorList>
    </citation>
    <scope>VARIANTS IMD31C GLY-165; HIS-165; ASN-170; ARG-174; ILE-202; VAL-202; VAL-267; PRO-271; GLN-274; TRP-274; ILE-286 AND ALA-288</scope>
    <scope>CHARACTERIZATION OF VARIANTS IMD31C GLY-165 AND GLN-274</scope>
</reference>
<reference key="73">
    <citation type="journal article" date="2011" name="N. Engl. J. Med.">
        <title>STAT1 mutations in autosomal dominant chronic mucocutaneous candidiasis.</title>
        <authorList>
            <person name="van de Veerdonk F.L."/>
            <person name="Plantinga T.S."/>
            <person name="Hoischen A."/>
            <person name="Smeekens S.P."/>
            <person name="Joosten L.A."/>
            <person name="Gilissen C."/>
            <person name="Arts P."/>
            <person name="Rosentul D.C."/>
            <person name="Carmichael A.J."/>
            <person name="Smits-van der Graaf C.A."/>
            <person name="Kullberg B.J."/>
            <person name="van der Meer J.W."/>
            <person name="Lilic D."/>
            <person name="Veltman J.A."/>
            <person name="Netea M.G."/>
        </authorList>
    </citation>
    <scope>VARIANTS IMD31C VAL-267 AND TRP-274</scope>
</reference>
<reference key="74">
    <citation type="journal article" date="2012" name="Hum. Mutat.">
        <title>Dominant-negative STAT1 SH2 domain mutations in unrelated patients with Mendelian susceptibility to mycobacterial disease.</title>
        <authorList>
            <person name="Tsumura M."/>
            <person name="Okada S."/>
            <person name="Sakai H."/>
            <person name="Yasunaga S."/>
            <person name="Ohtsubo M."/>
            <person name="Murata T."/>
            <person name="Obata H."/>
            <person name="Yasumi T."/>
            <person name="Kong X.F."/>
            <person name="Abhyankar A."/>
            <person name="Heike T."/>
            <person name="Nakahata T."/>
            <person name="Nishikomori R."/>
            <person name="Al-Muhsen S."/>
            <person name="Boisson-Dupuis S."/>
            <person name="Casanova J.L."/>
            <person name="Alzahrani M."/>
            <person name="Shehri M.A."/>
            <person name="Elghazali G."/>
            <person name="Takihara Y."/>
            <person name="Kobayashi M."/>
        </authorList>
    </citation>
    <scope>VARIANTS IMD31A GLU-637 AND ARG-673</scope>
    <scope>CHARACTERIZATION OF VARIANTS IMD31A GLU-637 AND ARG-673</scope>
</reference>
<reference key="75">
    <citation type="journal article" date="2013" name="J. Med. Genet.">
        <title>New and recurrent gain-of-function STAT1 mutations in patients with chronic mucocutaneous candidiasis from Eastern and Central Europe.</title>
        <authorList>
            <person name="Soltesz B."/>
            <person name="Toth B."/>
            <person name="Shabashova N."/>
            <person name="Bondarenko A."/>
            <person name="Okada S."/>
            <person name="Cypowyj S."/>
            <person name="Abhyankar A."/>
            <person name="Csorba G."/>
            <person name="Tasko S."/>
            <person name="Sarkadi A.K."/>
            <person name="Mehes L."/>
            <person name="Rozsival P."/>
            <person name="Neumann D."/>
            <person name="Chernyshova L."/>
            <person name="Tulassay Z."/>
            <person name="Puel A."/>
            <person name="Casanova J.L."/>
            <person name="Sediva A."/>
            <person name="Litzman J."/>
            <person name="Marodi L."/>
        </authorList>
    </citation>
    <scope>VARIANTS IMD31C GLY-165; LYS-179; GLN-274; TRP-274; ARG-285 AND MET-385</scope>
    <scope>CHARACTERIZATION OF VARIANTS IMD31C LYS-179; GLN-274; TRP-274; ARG-285 AND MET-385</scope>
    <scope>CHARACTERIZATION OF VARIANT IMD31B CYS-701</scope>
</reference>
<reference key="76">
    <citation type="journal article" date="2014" name="J. Immunol.">
        <title>Two novel gain-of-function mutations of STAT1 responsible for chronic mucocutaneous candidiasis disease: impaired production of IL-17A and IL-22, and the presence of anti-IL-17F autoantibody.</title>
        <authorList>
            <person name="Yamazaki Y."/>
            <person name="Yamada M."/>
            <person name="Kawai T."/>
            <person name="Morio T."/>
            <person name="Onodera M."/>
            <person name="Ueki M."/>
            <person name="Watanabe N."/>
            <person name="Takada H."/>
            <person name="Takezaki S."/>
            <person name="Chida N."/>
            <person name="Kobayashi I."/>
            <person name="Ariga T."/>
        </authorList>
    </citation>
    <scope>VARIANTS IMD31C GLU-278 AND ASP-384</scope>
    <scope>CHARACTERIZATION OF VARIANTS IMD31C GLU-278; ASP-384 AND MET-385</scope>
</reference>
<reference key="77">
    <citation type="journal article" date="2015" name="Mol. Immunol.">
        <title>A novel gain-of-function STAT1 mutation resulting in basal phosphorylation of STAT1 and increased distal IFN-gamma-mediated responses in chronic mucocutaneous candidiasis.</title>
        <authorList>
            <person name="Martinez-Martinez L."/>
            <person name="Martinez-Saavedra M.T."/>
            <person name="Fuentes-Prior P."/>
            <person name="Barnadas M."/>
            <person name="Rubiales M.V."/>
            <person name="Noda J."/>
            <person name="Badell I."/>
            <person name="Rodriguez-Gallego C."/>
            <person name="Calle-Martin O.L."/>
        </authorList>
    </citation>
    <scope>VARIANT IMD31C ASN-298</scope>
    <scope>CHARACTERIZATION OF VARIANT IMD31C ASN-298</scope>
</reference>
<accession>P42224</accession>
<accession>A8K989</accession>
<accession>B2RCA0</accession>
<accession>D2KFR8</accession>
<accession>D3DPI7</accession>
<accession>Q53S88</accession>
<accession>Q53XW4</accession>
<accession>Q68D00</accession>
<accession>Q9UDL5</accession>
<keyword id="KW-0002">3D-structure</keyword>
<keyword id="KW-0007">Acetylation</keyword>
<keyword id="KW-0010">Activator</keyword>
<keyword id="KW-0013">ADP-ribosylation</keyword>
<keyword id="KW-0025">Alternative splicing</keyword>
<keyword id="KW-0051">Antiviral defense</keyword>
<keyword id="KW-0175">Coiled coil</keyword>
<keyword id="KW-0963">Cytoplasm</keyword>
<keyword id="KW-0903">Direct protein sequencing</keyword>
<keyword id="KW-0225">Disease variant</keyword>
<keyword id="KW-0238">DNA-binding</keyword>
<keyword id="KW-0945">Host-virus interaction</keyword>
<keyword id="KW-1017">Isopeptide bond</keyword>
<keyword id="KW-0488">Methylation</keyword>
<keyword id="KW-0539">Nucleus</keyword>
<keyword id="KW-0597">Phosphoprotein</keyword>
<keyword id="KW-1267">Proteomics identification</keyword>
<keyword id="KW-1185">Reference proteome</keyword>
<keyword id="KW-0727">SH2 domain</keyword>
<keyword id="KW-0804">Transcription</keyword>
<keyword id="KW-0805">Transcription regulation</keyword>
<keyword id="KW-0832">Ubl conjugation</keyword>
<sequence>MSQWYELQQLDSKFLEQVHQLYDDSFPMEIRQYLAQWLEKQDWEHAANDVSFATIRFHDLLSQLDDQYSRFSLENNFLLQHNIRKSKRNLQDNFQEDPIQMSMIIYSCLKEERKILENAQRFNQAQSGNIQSTVMLDKQKELDSKVRNVKDKVMCIEHEIKSLEDLQDEYDFKCKTLQNREHETNGVAKSDQKQEQLLLKKMYLMLDNKRKEVVHKIIELLNVTELTQNALINDELVEWKRRQQSACIGGPPNACLDQLQNWFTIVAESLQQVRQQLKKLEELEQKYTYEHDPITKNKQVLWDRTFSLFQQLIQSSFVVERQPCMPTHPQRPLVLKTGVQFTVKLRLLVKLQELNYNLKVKVLFDKDVNERNTVKGFRKFNILGTHTKVMNMEESTNGSLAAEFRHLQLKEQKNAGTRTNEGPLIVTEELHSLSFETQLCQPGLVIDLETTSLPVVVISNVSQLPSGWASILWYNMLVAEPRNLSFFLTPPCARWAQLSEVLSWQFSSVTKRGLNVDQLNMLGEKLLGPNASPDGLIPWTRFCKENINDKNFPFWLWIESILELIKKHLLPLWNDGCIMGFISKERERALLKDQQPGTFLLRFSESSREGAITFTWVERSQNGGEPDFHAVEPYTKKELSAVTFPDIIRNYKVMAAENIPENPLKYLYPNIDKDHAFGKYYSRPKEAPEPMELDGPKGTGYIKTELISVSEVHPSRLQTTDNLLPMSPEEFDEVSRIVGSVEFDSMMNTV</sequence>
<protein>
    <recommendedName>
        <fullName>Signal transducer and activator of transcription 1-alpha/beta</fullName>
    </recommendedName>
    <alternativeName>
        <fullName>Transcription factor ISGF-3 components p91/p84</fullName>
    </alternativeName>
</protein>
<proteinExistence type="evidence at protein level"/>
<comment type="function">
    <text evidence="1 9 10 12 23 32 34 37 38 42 43 47 51 54">Signal transducer and transcription activator that mediates cellular responses to interferons (IFNs), cytokine KITLG/SCF and other cytokines and other growth factors (PubMed:12764129, PubMed:12855578, PubMed:15322115, PubMed:23940278, PubMed:34508746, PubMed:35568036, PubMed:9724754). Following type I IFN (IFN-alpha and IFN-beta) binding to cell surface receptors, signaling via protein kinases leads to activation of Jak kinases (TYK2 and JAK1) and to tyrosine phosphorylation of STAT1 and STAT2. The phosphorylated STATs dimerize and associate with ISGF3G/IRF-9 to form a complex termed ISGF3 transcription factor, that enters the nucleus (PubMed:28753426, PubMed:35568036). ISGF3 binds to the IFN stimulated response element (ISRE) to activate the transcription of IFN-stimulated genes (ISG), which drive the cell in an antiviral state (PubMed:28753426, PubMed:35568036). In response to type II IFN (IFN-gamma), STAT1 is tyrosine- and serine-phosphorylated (PubMed:26479788). It then forms a homodimer termed IFN-gamma-activated factor (GAF), migrates into the nucleus and binds to the IFN gamma activated sequence (GAS) to drive the expression of the target genes, inducing a cellular antiviral state (PubMed:8156998). Becomes activated in response to KITLG/SCF and KIT signaling (PubMed:15526160). May mediate cellular responses to activated FGFR1, FGFR2, FGFR3 and FGFR4 (PubMed:19088846). Following bacterial lipopolysaccharide (LPS)-induced TLR4 endocytosis, phosphorylated at Thr-749 by IKBKB which promotes binding of STAT1 to the 5'-TTTGAGGC-3' sequence in the ARID5A promoter, resulting in transcriptional activation of ARID5A and subsequent ARID5A-mediated stabilization of IL6 (PubMed:32209697). Phosphorylation at Thr-749 also promotes binding of STAT1 to the 5'-TTTGAGTC-3' sequence in the IL12B promoter and activation of IL12B transcription (PubMed:32209697). Involved in food tolerance in small intestine: associates with the Gasdermin-D, p13 cleavage product (13 kDa GSDMD) and promotes transcription of CIITA, inducing type 1 regulatory T (Tr1) cells in upper small intestine (By similarity).</text>
</comment>
<comment type="subunit">
    <text evidence="1 3 15 21 22 34 37 42 47 48 49 51 52">Isoform alpha homodimerizes upon IFN-gamma induced phosphorylation (PubMed:28753426, PubMed:8605877). Heterodimer with STAT2 upon IFN-alpha/beta induced phosphorylation (PubMed:8605877). The heterodimer STAT1:STAT2 forms the interferon-stimulated gene factor 3 complex (ISGF3) with IRF9 (By similarity). Interacts (phosphorylated at Ser-727) with PIAS1; the interaction results in release of STAT1 from its target gene (PubMed:17897103, PubMed:9724754). Interacts with IFNAR1; the interaction requires the phosphorylation of IFNAR1 at 'Tyr-466' (PubMed:9121453). Interacts with IFNAR2 (PubMed:9121453). Found in a complex with NMI and CREBBP/CBP (PubMed:9989503). Interacts with NMI which is required for CREBBP/CBP recruitment to the complex (PubMed:9989503). Interacts with PTK2/FAK1 (PubMed:11278462). Interacts with SRC (By similarity). Interacts with ERBB4 (phosphorylated) (PubMed:18721752). Interacts with PARP9 and DTX3L independently of IFN-beta or IFN-gamma-mediated STAT1 'Tyr-701' phosphorylation (PubMed:26479788). Interacts with histone acetyltransferase EP300/p300 in response to INF-gamma stimulation (PubMed:16257975, PubMed:26479788). Independently of its phosphorylation status, interacts with OTOP1 (By similarity). Interacts with IFNGR1 (PubMed:8156998). Interacts with STAT4 (PubMed:34508746).</text>
</comment>
<comment type="subunit">
    <text evidence="4">(Microbial infection) Interacts with Sendai virus C', C, Y1 and Y2 proteins, preventing activation of ISRE and GAS promoter.</text>
</comment>
<comment type="subunit">
    <text evidence="11">(Microbial infection) Interacts with Nipah virus P, V and W proteins preventing activation of ISRE and GAS promoter.</text>
</comment>
<comment type="subunit">
    <text evidence="4 11">(Microbial infection) Interacts with Rabies virus phosphoprotein preventing activation of ISRE and GAS promoter.</text>
</comment>
<comment type="subunit">
    <text evidence="13">(Microbial infection) Interacts with HCV core protein; the interaction results in STAT1 degradation.</text>
</comment>
<comment type="subunit">
    <text evidence="29">(Microbial infection) Interacts with ebolavirus protein VP24.</text>
</comment>
<comment type="subunit">
    <text evidence="41">(Microbial infection) Interacts with Epstein-Barr virus (EBV) tegument protein BGLF2; this interaction leads to STAT1 dephosphorylation and inhibition.</text>
</comment>
<comment type="subunit">
    <text evidence="20 39">(Microbial infection) Interacts (via N-terminus) with measles V protein; this interaction inhibits STAT1 phosphorylation by Jak1 and thereby the type I interferon signaling pathway.</text>
</comment>
<comment type="interaction">
    <interactant intactId="EBI-1057697">
        <id>P42224</id>
    </interactant>
    <interactant intactId="EBI-350322">
        <id>Q16531</id>
        <label>DDB1</label>
    </interactant>
    <organismsDiffer>false</organismsDiffer>
    <experiments>2</experiments>
</comment>
<comment type="interaction">
    <interactant intactId="EBI-1057697">
        <id>P42224</id>
    </interactant>
    <interactant intactId="EBI-448924">
        <id>Q01094</id>
        <label>E2F1</label>
    </interactant>
    <organismsDiffer>false</organismsDiffer>
    <experiments>2</experiments>
</comment>
<comment type="interaction">
    <interactant intactId="EBI-1057697">
        <id>P42224</id>
    </interactant>
    <interactant intactId="EBI-297353">
        <id>P00533</id>
        <label>EGFR</label>
    </interactant>
    <organismsDiffer>false</organismsDiffer>
    <experiments>7</experiments>
</comment>
<comment type="interaction">
    <interactant intactId="EBI-1057697">
        <id>P42224</id>
    </interactant>
    <interactant intactId="EBI-750700">
        <id>Q8N9N8</id>
        <label>EIF1AD</label>
    </interactant>
    <organismsDiffer>false</organismsDiffer>
    <experiments>4</experiments>
</comment>
<comment type="interaction">
    <interactant intactId="EBI-1057697">
        <id>P42224</id>
    </interactant>
    <interactant intactId="EBI-641062">
        <id>P04626</id>
        <label>ERBB2</label>
    </interactant>
    <organismsDiffer>false</organismsDiffer>
    <experiments>3</experiments>
</comment>
<comment type="interaction">
    <interactant intactId="EBI-1057697">
        <id>P42224</id>
    </interactant>
    <interactant intactId="EBI-852851">
        <id>P01100</id>
        <label>FOS</label>
    </interactant>
    <organismsDiffer>false</organismsDiffer>
    <experiments>6</experiments>
</comment>
<comment type="interaction">
    <interactant intactId="EBI-1057697">
        <id>P42224</id>
    </interactant>
    <interactant intactId="EBI-1547250">
        <id>P17181</id>
        <label>IFNAR1</label>
    </interactant>
    <organismsDiffer>false</organismsDiffer>
    <experiments>2</experiments>
</comment>
<comment type="interaction">
    <interactant intactId="EBI-1057697">
        <id>P42224</id>
    </interactant>
    <interactant intactId="EBI-958408">
        <id>P48551</id>
        <label>IFNAR2</label>
    </interactant>
    <organismsDiffer>false</organismsDiffer>
    <experiments>2</experiments>
</comment>
<comment type="interaction">
    <interactant intactId="EBI-1057697">
        <id>P42224</id>
    </interactant>
    <interactant intactId="EBI-1030755">
        <id>P15260</id>
        <label>IFNGR1</label>
    </interactant>
    <organismsDiffer>false</organismsDiffer>
    <experiments>4</experiments>
</comment>
<comment type="interaction">
    <interactant intactId="EBI-1057697">
        <id>P42224</id>
    </interactant>
    <interactant intactId="EBI-1383438">
        <id>P23458</id>
        <label>JAK1</label>
    </interactant>
    <organismsDiffer>false</organismsDiffer>
    <experiments>6</experiments>
</comment>
<comment type="interaction">
    <interactant intactId="EBI-1057697">
        <id>P42224</id>
    </interactant>
    <interactant intactId="EBI-358383">
        <id>P52294</id>
        <label>KPNA1</label>
    </interactant>
    <organismsDiffer>false</organismsDiffer>
    <experiments>4</experiments>
</comment>
<comment type="interaction">
    <interactant intactId="EBI-1057697">
        <id>P42224</id>
    </interactant>
    <interactant intactId="EBI-995373">
        <id>Q7Z434</id>
        <label>MAVS</label>
    </interactant>
    <organismsDiffer>false</organismsDiffer>
    <experiments>3</experiments>
</comment>
<comment type="interaction">
    <interactant intactId="EBI-1057697">
        <id>P42224</id>
    </interactant>
    <interactant intactId="EBI-1054396">
        <id>Q01804</id>
        <label>OTUD4</label>
    </interactant>
    <organismsDiffer>false</organismsDiffer>
    <experiments>3</experiments>
</comment>
<comment type="interaction">
    <interactant intactId="EBI-1057697">
        <id>P42224</id>
    </interactant>
    <interactant intactId="EBI-702142">
        <id>Q05397</id>
        <label>PTK2</label>
    </interactant>
    <organismsDiffer>false</organismsDiffer>
    <experiments>3</experiments>
</comment>
<comment type="interaction">
    <interactant intactId="EBI-1057697">
        <id>P42224</id>
    </interactant>
    <interactant intactId="EBI-995350">
        <id>O95786</id>
        <label>RIGI</label>
    </interactant>
    <organismsDiffer>false</organismsDiffer>
    <experiments>4</experiments>
</comment>
<comment type="interaction">
    <interactant intactId="EBI-1057697">
        <id>P42224</id>
    </interactant>
    <interactant intactId="EBI-78598">
        <id>P19793</id>
        <label>RXRA</label>
    </interactant>
    <organismsDiffer>false</organismsDiffer>
    <experiments>2</experiments>
</comment>
<comment type="interaction">
    <interactant intactId="EBI-1057697">
        <id>P42224</id>
    </interactant>
    <interactant intactId="EBI-1057697">
        <id>P42224</id>
        <label>STAT1</label>
    </interactant>
    <organismsDiffer>false</organismsDiffer>
    <experiments>4</experiments>
</comment>
<comment type="interaction">
    <interactant intactId="EBI-1057697">
        <id>P42224</id>
    </interactant>
    <interactant intactId="EBI-1546963">
        <id>P52630</id>
        <label>STAT2</label>
    </interactant>
    <organismsDiffer>false</organismsDiffer>
    <experiments>19</experiments>
</comment>
<comment type="interaction">
    <interactant intactId="EBI-1057697">
        <id>P42224</id>
    </interactant>
    <interactant intactId="EBI-518675">
        <id>P40763</id>
        <label>STAT3</label>
    </interactant>
    <organismsDiffer>false</organismsDiffer>
    <experiments>10</experiments>
</comment>
<comment type="interaction">
    <interactant intactId="EBI-1057697">
        <id>P42224</id>
    </interactant>
    <interactant intactId="EBI-25475856">
        <id>P0DTC9</id>
        <label>N</label>
    </interactant>
    <organismsDiffer>true</organismsDiffer>
    <experiments>6</experiments>
</comment>
<comment type="interaction">
    <interactant intactId="EBI-1057697">
        <id>P42224</id>
    </interactant>
    <interactant intactId="EBI-7789600">
        <id>P07239</id>
        <label>OPG106</label>
    </interactant>
    <organismsDiffer>true</organismsDiffer>
    <experiments>2</experiments>
</comment>
<comment type="interaction">
    <interactant intactId="EBI-1057697">
        <id>P42224</id>
    </interactant>
    <interactant intactId="EBI-25474821">
        <id>P0DTC2</id>
        <label>S</label>
    </interactant>
    <organismsDiffer>true</organismsDiffer>
    <experiments>2</experiments>
</comment>
<comment type="interaction">
    <interactant intactId="EBI-1057697">
        <id>P42224</id>
    </interactant>
    <interactant intactId="EBI-11499224">
        <id>Q4VW77</id>
        <label>UL47</label>
    </interactant>
    <organismsDiffer>true</organismsDiffer>
    <experiments>2</experiments>
</comment>
<comment type="interaction">
    <interactant intactId="EBI-1057697">
        <id>P42224</id>
    </interactant>
    <interactant intactId="EBI-6692439">
        <id>P03255-1</id>
    </interactant>
    <organismsDiffer>true</organismsDiffer>
    <experiments>2</experiments>
</comment>
<comment type="interaction">
    <interactant intactId="EBI-1057697">
        <id>P42224</id>
    </interactant>
    <interactant intactId="EBI-6859460">
        <id>P03255-2</id>
    </interactant>
    <organismsDiffer>true</organismsDiffer>
    <experiments>2</experiments>
</comment>
<comment type="interaction">
    <interactant intactId="EBI-1057697">
        <id>P42224</id>
    </interactant>
    <interactant intactId="EBI-6941357">
        <id>P26664</id>
    </interactant>
    <organismsDiffer>true</organismsDiffer>
    <experiments>5</experiments>
</comment>
<comment type="interaction">
    <interactant intactId="EBI-1057697">
        <id>P42224</id>
    </interactant>
    <interactant intactId="EBI-6377335">
        <id>PRO_0000037566</id>
        <dbReference type="UniProtKB" id="P27958"/>
    </interactant>
    <organismsDiffer>true</organismsDiffer>
    <experiments>2</experiments>
</comment>
<comment type="interaction">
    <interactant intactId="EBI-1057697">
        <id>P42224</id>
    </interactant>
    <interactant intactId="EBI-8753518">
        <id>PRO_0000037576</id>
        <dbReference type="UniProtKB" id="P27958"/>
    </interactant>
    <organismsDiffer>true</organismsDiffer>
    <experiments>4</experiments>
</comment>
<comment type="interaction">
    <interactant intactId="EBI-15711971">
        <id>P42224-1</id>
    </interactant>
    <interactant intactId="EBI-2515339">
        <id>Q9Y4C1</id>
        <label>KDM3A</label>
    </interactant>
    <organismsDiffer>false</organismsDiffer>
    <experiments>8</experiments>
</comment>
<comment type="interaction">
    <interactant intactId="EBI-15711971">
        <id>P42224-1</id>
    </interactant>
    <interactant intactId="EBI-15711971">
        <id>P42224-1</id>
        <label>STAT1</label>
    </interactant>
    <organismsDiffer>false</organismsDiffer>
    <experiments>3</experiments>
</comment>
<comment type="interaction">
    <interactant intactId="EBI-15711971">
        <id>P42224-1</id>
    </interactant>
    <interactant intactId="EBI-16085959">
        <id>P06498</id>
    </interactant>
    <organismsDiffer>true</organismsDiffer>
    <experiments>2</experiments>
</comment>
<comment type="interaction">
    <interactant intactId="EBI-15712015">
        <id>P42224-2</id>
    </interactant>
    <interactant intactId="EBI-15712015">
        <id>P42224-2</id>
        <label>STAT1</label>
    </interactant>
    <organismsDiffer>false</organismsDiffer>
    <experiments>4</experiments>
</comment>
<comment type="subcellular location">
    <subcellularLocation>
        <location evidence="12 34 36 37 38">Cytoplasm</location>
    </subcellularLocation>
    <subcellularLocation>
        <location evidence="12 34 37 38">Nucleus</location>
    </subcellularLocation>
    <text evidence="12 34 37">Translocated into the nucleus upon tyrosine phosphorylation and dimerization, in response to IFN-gamma and signaling by activated FGFR1, FGFR2, FGFR3 or FGFR4 (PubMed:15322115). Monomethylation at Lys-525 is required for phosphorylation at Tyr-701 and translocation into the nucleus (PubMed:28753426). Translocates into the nucleus in response to interferon-beta stimulation (PubMed:26479788).</text>
</comment>
<comment type="alternative products">
    <event type="alternative splicing"/>
    <isoform>
        <id>P42224-1</id>
        <name>Alpha</name>
        <name>p91</name>
        <sequence type="displayed"/>
    </isoform>
    <isoform>
        <id>P42224-2</id>
        <name>Beta</name>
        <name>p84</name>
        <sequence type="described" ref="VSP_006282"/>
    </isoform>
</comment>
<comment type="PTM">
    <text evidence="32">Deubiquitinated by USP13; leading to STAT1 stabilization and positive regulation of type I and type II IFN signalings.</text>
</comment>
<comment type="PTM">
    <text evidence="1 3 6 7 12 15 16 19 21 23 25 28 34 37 38 43 45 46">Phosphorylated on tyrosine and serine residues in response to a variety of cytokines/growth hormones including IFN-alpha, IFN-gamma, PDGF and EGF (PubMed:26479788, PubMed:28753426). Activated KIT promotes phosphorylation on tyrosine residues and subsequent translocation to the nucleus (PubMed:21135090). Upon EGF stimulation, phosphorylation on Tyr-701 (lacking in beta form) by JAK1, JAK2 or TYK2 promotes dimerization and subsequent translocation to the nucleus (PubMed:28753426, PubMed:7657660). Growth hormone (GH) activates STAT1 signaling only via JAK2 (PubMed:7657660). Tyrosine phosphorylated in response to constitutively activated FGFR1, FGFR2, FGFR3 and FGFR4 (PubMed:17561467, PubMed:19088846). Phosphorylation on Ser-727 by several kinases including MAPK14, ERK1/2, CAMK2/CAMKII and CK2 in response to IFN-gamma stimulation, is required for maximal transcriptional activity (PubMed:15322115, PubMed:16799645, PubMed:17897103, PubMed:7543024). Phosphorylated on Ser-727 by CAMK2/CAMKII in response to IFN-gamma stimulation and calcium mobilization, promoting activity (PubMed:11972023, PubMed:16257975). Phosphorylated by CAMK2/CAMKII in response to IFN-beta stimulation and calcium mobilization in epithelial cells, promoting activity (PubMed:35568036). Phosphorylation on Ser-727 promotes sumoylation though increasing interaction with PIAS (PubMed:17897103). Phosphorylation on Ser-727 by PRKCD induces apoptosis in response to DNA-damaging agents (PubMed:15322115). Phosphorylated on tyrosine residues when PTK2/FAK1 is activated; most likely this is catalyzed by a SRC family kinase (PubMed:11278462). Dephosphorylation on tyrosine residues by PTPN2 negatively regulates interferon-mediated signaling (PubMed:12138178). Upon viral infection or IFN induction, phosphorylation on Ser-708 occurs much later than phosphorylation on Tyr-701 and is required for the binding of ISGF3 on the ISREs of a subset of IFN-stimulated genes IKBKE-dependent (PubMed:22065572). Phosphorylation at Tyr-701 and Ser-708 are mutually exclusive, phosphorylation at Ser-708 requires previous dephosphorylation of Tyr-701 (PubMed:22065572). Phosphorylation at Thr-749 by IKBKB/IKKB promotes transcriptional activation of ARID5A and IL12B by STAT1 (PubMed:32209697). Phosphorylation at Thr-749 restricts interferon signaling and anti-inflammatory responses and promotes innate inflammatory responses (By similarity).</text>
</comment>
<comment type="PTM">
    <text evidence="12 21 25 28 45">Sumoylated with SUMO1, SUMO2 and SUMO3. Sumoylation is enhanced by IFN-gamma-induced phosphorylation on Ser-727, and by interaction with PIAS proteins. Enhances the transactivation activity.</text>
</comment>
<comment type="PTM">
    <text evidence="14">ISGylated.</text>
</comment>
<comment type="PTM">
    <text evidence="36 57">Mono-ADP-ribosylated at Glu-657 and Glu-705 by PARP14; ADP-ribosylation prevents phosphorylation at Tyr-701 (PubMed:27796300). However, the role of ADP-ribosylation in the prevention of phosphorylation has been called into question and the lack of phosphorylation may be due to sumoylation of Lys-703 (PubMed:29858569).</text>
</comment>
<comment type="PTM">
    <text evidence="37">Monomethylated at Lys-525 by SETD2; monomethylation is necessary for phosphorylation at Tyr-701, translocation into the nucleus and activation of the antiviral defense.</text>
</comment>
<comment type="PTM">
    <text evidence="40">(Microbial infection) Ubiquitinated by Herpes simplex virus 2 E3 ubiquitin ligase ICP22.</text>
</comment>
<comment type="disease" evidence="8 24 31">
    <disease id="DI-03106">
        <name>Immunodeficiency 31B</name>
        <acronym>IMD31B</acronym>
        <description>A disorder characterized by susceptibility to severe mycobacterial and viral infections. Affected individuals can develop disseminated infections and die of viral illness.</description>
        <dbReference type="MIM" id="613796"/>
    </disease>
    <text>The disease is caused by variants affecting the gene represented in this entry.</text>
</comment>
<comment type="disease" evidence="5 17 30">
    <disease id="DI-04224">
        <name>Immunodeficiency 31A</name>
        <acronym>IMD31A</acronym>
        <description>A form of Mendelian susceptibility to mycobacterial disease, a rare condition caused by impairment of interferon-gamma mediated immunity. It is characterized by predisposition to illness caused by moderately virulent mycobacterial species, such as Bacillus Calmette-Guerin (BCG) vaccine, environmental non-tuberculous mycobacteria, and by the more virulent Mycobacterium tuberculosis. Other microorganisms rarely cause severe clinical disease in individuals with susceptibility to mycobacterial infections, with the exception of Salmonella which infects less than 50% of these individuals. Clinical outcome severity depends on the degree of impairment of interferon-gamma mediated immunity. Some patients die of overwhelming mycobacterial disease with lepromatous-like lesions in early childhood, whereas others develop, later in life, disseminated but curable infections with tuberculoid granulomas. IMD31A has low penetrance, and affected individuals have relatively mild disease and good prognosis. IMD31A confers a predisposition to mycobacterial infections only, with no increased susceptibility to viral infections.</description>
        <dbReference type="MIM" id="614892"/>
    </disease>
    <text>The disease is caused by variants affecting the gene represented in this entry.</text>
</comment>
<comment type="disease" evidence="26 27 31 33 35">
    <disease id="DI-03179">
        <name>Immunodeficiency 31C</name>
        <acronym>IMD31C</acronym>
        <description>A primary immunodeficiency disorder with altered immune responses and impaired clearance of fungal infections, selective against Candida. It is characterized by persistent and/or recurrent infections of the skin, nails and mucous membranes caused by organisms of the genus Candida, mainly Candida albicans.</description>
        <dbReference type="MIM" id="614162"/>
    </disease>
    <text evidence="26">The disease is caused by variants affecting the gene represented in this entry. STAT1 mutations in patients with autosomal dominant candidiasis lead to defective responses of type 1 and type 17 helper T-cells, characterized by reduced production of interferon-alpha, interleukin-17, and interleukin-22. These cytokines are crucial for the antifungal defense of skin and mucosa (PubMed:21714643).</text>
</comment>
<comment type="similarity">
    <text evidence="56">Belongs to the transcription factor STAT family.</text>
</comment>
<comment type="caution">
    <text evidence="36 57">Has been shown to be mono-ADP-ribosylated at Glu-657 and Glu-705 by PARP14 which prevents phosphorylation at Tyr-701 (PubMed:27796300). However, the role of ADP-ribosylation in the prevention of phosphorylation has been called into question (PubMed:29858569). It has been suggested that the lack of phosphorylation may be due to sumoylation of Lys-703 (PubMed:29858569).</text>
</comment>
<comment type="online information" name="STAT1base">
    <link uri="https://databases.lovd.nl/shared/genes/STAT1"/>
    <text>STAT1 mutation db</text>
</comment>
<comment type="online information" name="Wikipedia">
    <link uri="https://en.wikipedia.org/wiki/STAT1"/>
    <text>STAT1 entry</text>
</comment>